<protein>
    <recommendedName>
        <fullName>Basement membrane-specific heparan sulfate proteoglycan core protein</fullName>
        <shortName>HSPG</shortName>
    </recommendedName>
    <alternativeName>
        <fullName>Perlecan</fullName>
        <shortName>PLC</shortName>
    </alternativeName>
    <component>
        <recommendedName>
            <fullName>Endorepellin</fullName>
        </recommendedName>
    </component>
    <component>
        <recommendedName>
            <fullName>LG3 peptide</fullName>
        </recommendedName>
    </component>
</protein>
<reference key="1">
    <citation type="journal article" date="1992" name="J. Biol. Chem.">
        <title>Primary structure of the human heparan sulfate proteoglycan from basement membrane (HSPG2/perlecan). A chimeric molecule with multiple domains homologous to the low density lipoprotein receptor, laminin, neural cell adhesion molecules, and epidermal growth factor.</title>
        <authorList>
            <person name="Murdoch A.D."/>
            <person name="Dodge G.R."/>
            <person name="Cohen I."/>
            <person name="Tuan R.S."/>
            <person name="Iozzo R.V."/>
        </authorList>
    </citation>
    <scope>NUCLEOTIDE SEQUENCE [MRNA]</scope>
    <scope>VARIANTS VAL-638; SER-765 AND VAL-1503</scope>
    <source>
        <tissue>Colon</tissue>
        <tissue>Skin</tissue>
    </source>
</reference>
<reference key="2">
    <citation type="journal article" date="1992" name="J. Cell Biol.">
        <title>Human basement membrane heparan sulfate proteoglycan core protein: a 467-kD protein containing multiple domains resembling elements of the low density lipoprotein receptor, laminin, neural cell adhesion molecules, and epidermal growth factor.</title>
        <authorList>
            <person name="Kallunki P."/>
            <person name="Tryggvason K."/>
        </authorList>
    </citation>
    <scope>NUCLEOTIDE SEQUENCE [MRNA]</scope>
    <scope>VARIANTS VAL-638; SER-765; VAL-1503; HIS-2980; GLY-2995; THR-3168 AND GLN-3632</scope>
</reference>
<reference key="3">
    <citation type="journal article" date="2006" name="Nature">
        <title>The DNA sequence and biological annotation of human chromosome 1.</title>
        <authorList>
            <person name="Gregory S.G."/>
            <person name="Barlow K.F."/>
            <person name="McLay K.E."/>
            <person name="Kaul R."/>
            <person name="Swarbreck D."/>
            <person name="Dunham A."/>
            <person name="Scott C.E."/>
            <person name="Howe K.L."/>
            <person name="Woodfine K."/>
            <person name="Spencer C.C.A."/>
            <person name="Jones M.C."/>
            <person name="Gillson C."/>
            <person name="Searle S."/>
            <person name="Zhou Y."/>
            <person name="Kokocinski F."/>
            <person name="McDonald L."/>
            <person name="Evans R."/>
            <person name="Phillips K."/>
            <person name="Atkinson A."/>
            <person name="Cooper R."/>
            <person name="Jones C."/>
            <person name="Hall R.E."/>
            <person name="Andrews T.D."/>
            <person name="Lloyd C."/>
            <person name="Ainscough R."/>
            <person name="Almeida J.P."/>
            <person name="Ambrose K.D."/>
            <person name="Anderson F."/>
            <person name="Andrew R.W."/>
            <person name="Ashwell R.I.S."/>
            <person name="Aubin K."/>
            <person name="Babbage A.K."/>
            <person name="Bagguley C.L."/>
            <person name="Bailey J."/>
            <person name="Beasley H."/>
            <person name="Bethel G."/>
            <person name="Bird C.P."/>
            <person name="Bray-Allen S."/>
            <person name="Brown J.Y."/>
            <person name="Brown A.J."/>
            <person name="Buckley D."/>
            <person name="Burton J."/>
            <person name="Bye J."/>
            <person name="Carder C."/>
            <person name="Chapman J.C."/>
            <person name="Clark S.Y."/>
            <person name="Clarke G."/>
            <person name="Clee C."/>
            <person name="Cobley V."/>
            <person name="Collier R.E."/>
            <person name="Corby N."/>
            <person name="Coville G.J."/>
            <person name="Davies J."/>
            <person name="Deadman R."/>
            <person name="Dunn M."/>
            <person name="Earthrowl M."/>
            <person name="Ellington A.G."/>
            <person name="Errington H."/>
            <person name="Frankish A."/>
            <person name="Frankland J."/>
            <person name="French L."/>
            <person name="Garner P."/>
            <person name="Garnett J."/>
            <person name="Gay L."/>
            <person name="Ghori M.R.J."/>
            <person name="Gibson R."/>
            <person name="Gilby L.M."/>
            <person name="Gillett W."/>
            <person name="Glithero R.J."/>
            <person name="Grafham D.V."/>
            <person name="Griffiths C."/>
            <person name="Griffiths-Jones S."/>
            <person name="Grocock R."/>
            <person name="Hammond S."/>
            <person name="Harrison E.S.I."/>
            <person name="Hart E."/>
            <person name="Haugen E."/>
            <person name="Heath P.D."/>
            <person name="Holmes S."/>
            <person name="Holt K."/>
            <person name="Howden P.J."/>
            <person name="Hunt A.R."/>
            <person name="Hunt S.E."/>
            <person name="Hunter G."/>
            <person name="Isherwood J."/>
            <person name="James R."/>
            <person name="Johnson C."/>
            <person name="Johnson D."/>
            <person name="Joy A."/>
            <person name="Kay M."/>
            <person name="Kershaw J.K."/>
            <person name="Kibukawa M."/>
            <person name="Kimberley A.M."/>
            <person name="King A."/>
            <person name="Knights A.J."/>
            <person name="Lad H."/>
            <person name="Laird G."/>
            <person name="Lawlor S."/>
            <person name="Leongamornlert D.A."/>
            <person name="Lloyd D.M."/>
            <person name="Loveland J."/>
            <person name="Lovell J."/>
            <person name="Lush M.J."/>
            <person name="Lyne R."/>
            <person name="Martin S."/>
            <person name="Mashreghi-Mohammadi M."/>
            <person name="Matthews L."/>
            <person name="Matthews N.S.W."/>
            <person name="McLaren S."/>
            <person name="Milne S."/>
            <person name="Mistry S."/>
            <person name="Moore M.J.F."/>
            <person name="Nickerson T."/>
            <person name="O'Dell C.N."/>
            <person name="Oliver K."/>
            <person name="Palmeiri A."/>
            <person name="Palmer S.A."/>
            <person name="Parker A."/>
            <person name="Patel D."/>
            <person name="Pearce A.V."/>
            <person name="Peck A.I."/>
            <person name="Pelan S."/>
            <person name="Phelps K."/>
            <person name="Phillimore B.J."/>
            <person name="Plumb R."/>
            <person name="Rajan J."/>
            <person name="Raymond C."/>
            <person name="Rouse G."/>
            <person name="Saenphimmachak C."/>
            <person name="Sehra H.K."/>
            <person name="Sheridan E."/>
            <person name="Shownkeen R."/>
            <person name="Sims S."/>
            <person name="Skuce C.D."/>
            <person name="Smith M."/>
            <person name="Steward C."/>
            <person name="Subramanian S."/>
            <person name="Sycamore N."/>
            <person name="Tracey A."/>
            <person name="Tromans A."/>
            <person name="Van Helmond Z."/>
            <person name="Wall M."/>
            <person name="Wallis J.M."/>
            <person name="White S."/>
            <person name="Whitehead S.L."/>
            <person name="Wilkinson J.E."/>
            <person name="Willey D.L."/>
            <person name="Williams H."/>
            <person name="Wilming L."/>
            <person name="Wray P.W."/>
            <person name="Wu Z."/>
            <person name="Coulson A."/>
            <person name="Vaudin M."/>
            <person name="Sulston J.E."/>
            <person name="Durbin R.M."/>
            <person name="Hubbard T."/>
            <person name="Wooster R."/>
            <person name="Dunham I."/>
            <person name="Carter N.P."/>
            <person name="McVean G."/>
            <person name="Ross M.T."/>
            <person name="Harrow J."/>
            <person name="Olson M.V."/>
            <person name="Beck S."/>
            <person name="Rogers J."/>
            <person name="Bentley D.R."/>
        </authorList>
    </citation>
    <scope>NUCLEOTIDE SEQUENCE [LARGE SCALE GENOMIC DNA]</scope>
</reference>
<reference key="4">
    <citation type="journal article" date="1993" name="Proc. Natl. Acad. Sci. U.S.A.">
        <title>Structural characterization of the complete human perlecan gene and its promoter.</title>
        <authorList>
            <person name="Cohen I.R."/>
            <person name="Graessel S."/>
            <person name="Murdoch A.D."/>
            <person name="Iozzo R.V."/>
        </authorList>
    </citation>
    <scope>NUCLEOTIDE SEQUENCE [GENOMIC DNA] OF 1-21</scope>
</reference>
<reference key="5">
    <citation type="journal article" date="2000" name="Nat. Genet.">
        <title>Perlecan, the major proteoglycan of basement membranes, is altered in patients with Schwartz-Jampel syndrome (chondrodystrophic myotonia).</title>
        <authorList>
            <person name="Nicole S."/>
            <person name="Davoine C.-S."/>
            <person name="Topaloglu H."/>
            <person name="Cattolico L."/>
            <person name="Barral D."/>
            <person name="Beighton P."/>
            <person name="Ben-Hamida C."/>
            <person name="Hammouda H."/>
            <person name="Cruaud C."/>
            <person name="White P.S."/>
            <person name="Samson D."/>
            <person name="Urtizberea J.A."/>
            <person name="Lehmann-Horn F."/>
            <person name="Weissenbach J."/>
            <person name="Hentati F."/>
            <person name="Fontaine B."/>
        </authorList>
    </citation>
    <scope>NUCLEOTIDE SEQUENCE [GENOMIC DNA] OF 22-4391</scope>
    <scope>VARIANTS VAL-638; SER-765 AND VAL-1503</scope>
    <scope>VARIANT SJS1 TYR-1532</scope>
</reference>
<reference key="6">
    <citation type="journal article" date="1991" name="Genomics">
        <title>Cloning of human heparan sulfate proteoglycan core protein, assignment of the gene (HSPG2) to 1p36.1--&gt;p35 and identification of a BamHI restriction fragment length polymorphism.</title>
        <authorList>
            <person name="Kallunki P."/>
            <person name="Eddy R.L."/>
            <person name="Byers M.G."/>
            <person name="Kestila M."/>
            <person name="Shows T.B."/>
            <person name="Tryggvason K."/>
        </authorList>
    </citation>
    <scope>NUCLEOTIDE SEQUENCE [MRNA] OF 890-1396</scope>
    <source>
        <tissue>Fibrosarcoma</tissue>
    </source>
</reference>
<reference key="7">
    <citation type="journal article" date="1991" name="Genomics">
        <title>Heparan sulfate proteoglycan of human colon: partial molecular cloning, cellular expression, and mapping of the gene (HSPG2) to the short arm of human chromosome 1.</title>
        <authorList>
            <person name="Dodge G.R."/>
            <person name="Kovalszky I."/>
            <person name="Chu M.-L."/>
            <person name="Hassell J.R."/>
            <person name="McBride O.W."/>
            <person name="Yi H.F."/>
            <person name="Iozzo R.V."/>
        </authorList>
    </citation>
    <scope>NUCLEOTIDE SEQUENCE [MRNA] OF 1016-1470</scope>
    <source>
        <tissue>Colon</tissue>
    </source>
</reference>
<reference key="8">
    <citation type="journal article" date="1989" name="J. Cell Biol.">
        <title>Matrix-associated heparan sulfate proteoglycan: core protein-specific monoclonal antibodies decorate the pericellular matrix of connective tissue cells and the stromal side of basement membranes.</title>
        <authorList>
            <person name="Heremans A."/>
            <person name="van der Schueren B."/>
            <person name="de Cock B."/>
            <person name="Paulsson M."/>
            <person name="Cassiman J.-J."/>
            <person name="van den Berghe H."/>
            <person name="David G."/>
        </authorList>
    </citation>
    <scope>PROTEIN SEQUENCE OF 1379-1398 AND 2259-2278</scope>
</reference>
<reference key="9">
    <citation type="journal article" date="2005" name="J. Biol. Chem.">
        <title>BMP-1/Tolloid-like metalloproteases process endorepellin, the angiostatic C-terminal fragment of perlecan.</title>
        <authorList>
            <person name="Gonzalez E.M."/>
            <person name="Reed C.C."/>
            <person name="Bix G."/>
            <person name="Fu J."/>
            <person name="Zhang Y."/>
            <person name="Gopalakrishnan B."/>
            <person name="Greenspan D.S."/>
            <person name="Iozzo R.V."/>
        </authorList>
    </citation>
    <scope>PROTEIN SEQUENCE OF 4197-4208</scope>
    <scope>PROTEOLYTIC PROCESSING AT ASN-4196</scope>
    <scope>FUNCTION OF LG3 PEPTIDE</scope>
    <scope>GLYCOSYLATION</scope>
    <scope>MUTAGENESIS OF ASP-4197; ASP-4258 AND ASN-4327</scope>
</reference>
<reference key="10">
    <citation type="journal article" date="2003" name="J. Biol. Chem.">
        <title>Endorepellin, a novel inhibitor of angiogenesis derived from the C terminus of perlecan.</title>
        <authorList>
            <person name="Mongiat M."/>
            <person name="Sweeney S.M."/>
            <person name="San Antonio J.D."/>
            <person name="Fu J."/>
            <person name="Iozzo R.V."/>
        </authorList>
    </citation>
    <scope>PROTEIN SEQUENCE OF 4197-4203</scope>
    <scope>PROTEOLYTIC PROCESSING AT ASN-4196</scope>
    <scope>FUNCTION OF ENDOREPELLIN AND LG3 PEPTIDE</scope>
</reference>
<reference key="11">
    <citation type="journal article" date="2001" name="J. Biol. Chem.">
        <title>Fibroblast growth factor-binding protein is a novel partner for perlecan protein core.</title>
        <authorList>
            <person name="Mongiat M."/>
            <person name="Otto J."/>
            <person name="Oldershaw R."/>
            <person name="Ferrer F."/>
            <person name="Sato J.D."/>
            <person name="Iozzo R.V."/>
        </authorList>
    </citation>
    <scope>INTERACTION WITH FGFBP1</scope>
</reference>
<reference key="12">
    <citation type="journal article" date="2001" name="Nat. Genet.">
        <title>Dyssegmental dysplasia, Silverman-Handmaker type, is caused by functional null mutations of the perlecan gene.</title>
        <authorList>
            <person name="Arikawa-Hirasawa E."/>
            <person name="Wilcox W.R."/>
            <person name="Le A.H."/>
            <person name="Silverman N."/>
            <person name="Govindraj P."/>
            <person name="Hassell J.R."/>
            <person name="Yamada Y."/>
        </authorList>
    </citation>
    <scope>INVOLVEMENT IN DDSH</scope>
</reference>
<reference key="13">
    <citation type="journal article" date="2002" name="J. Biol. Chem.">
        <title>The type XIII collagen ectodomain is a 150-nm rod and capable of binding to fibronectin, nidogen-2, perlecan, and heparin.</title>
        <authorList>
            <person name="Tu H."/>
            <person name="Sasaki T."/>
            <person name="Snellman A."/>
            <person name="Gohring W."/>
            <person name="Pirila P."/>
            <person name="Timpl R."/>
            <person name="Pihlajaniemi T."/>
        </authorList>
    </citation>
    <scope>INTERACTION WITH COL13A1</scope>
</reference>
<reference key="14">
    <citation type="journal article" date="2003" name="J. Biol. Chem.">
        <title>Perlecan protein core interacts with extracellular matrix protein 1 (ECM1), a glycoprotein involved in bone formation and angiogenesis.</title>
        <authorList>
            <person name="Mongiat M."/>
            <person name="Fu J."/>
            <person name="Oldershaw R."/>
            <person name="Greenhalgh R."/>
            <person name="Gown A.M."/>
            <person name="Iozzo R.V."/>
        </authorList>
    </citation>
    <scope>INTERACTION WITH ECM1</scope>
</reference>
<reference key="15">
    <citation type="journal article" date="2003" name="Nat. Biotechnol.">
        <title>Identification and quantification of N-linked glycoproteins using hydrazide chemistry, stable isotope labeling and mass spectrometry.</title>
        <authorList>
            <person name="Zhang H."/>
            <person name="Li X.-J."/>
            <person name="Martin D.B."/>
            <person name="Aebersold R."/>
        </authorList>
    </citation>
    <scope>GLYCOSYLATION AT ASN-2121</scope>
</reference>
<reference key="16">
    <citation type="journal article" date="2005" name="J. Proteome Res.">
        <title>Human plasma N-glycoproteome analysis by immunoaffinity subtraction, hydrazide chemistry, and mass spectrometry.</title>
        <authorList>
            <person name="Liu T."/>
            <person name="Qian W.-J."/>
            <person name="Gritsenko M.A."/>
            <person name="Camp D.G. II"/>
            <person name="Monroe M.E."/>
            <person name="Moore R.J."/>
            <person name="Smith R.D."/>
        </authorList>
    </citation>
    <scope>GLYCOSYLATION [LARGE SCALE ANALYSIS] AT ASN-1755</scope>
    <source>
        <tissue>Plasma</tissue>
    </source>
</reference>
<reference key="17">
    <citation type="journal article" date="2006" name="J. Natl. Cancer Inst.">
        <title>Endorepellin in vivo: targeting the tumor vasculature and retarding cancer growth and metabolism.</title>
        <authorList>
            <person name="Bix G."/>
            <person name="Castello R."/>
            <person name="Burrows M."/>
            <person name="Zoeller J.J."/>
            <person name="Weech M."/>
            <person name="Iozzo R.A."/>
            <person name="Cardi C."/>
            <person name="Thakur M.L."/>
            <person name="Barker C.A."/>
            <person name="Camphausen K."/>
            <person name="Iozzo R.V."/>
        </authorList>
    </citation>
    <scope>FUNCTION OF ENDOREPELLIN</scope>
</reference>
<reference key="18">
    <citation type="journal article" date="2008" name="J. Biol. Chem.">
        <title>Integrin alpha2beta1 is the required receptor for endorepellin angiostatic activity.</title>
        <authorList>
            <person name="Woodall B.P."/>
            <person name="Nystroem A."/>
            <person name="Iozzo R.A."/>
            <person name="Eble J.A."/>
            <person name="Niland S."/>
            <person name="Krieg T."/>
            <person name="Eckes B."/>
            <person name="Pozzi A."/>
            <person name="Iozzo R.V."/>
        </authorList>
    </citation>
    <scope>FUNCTION OF ENDOREPELLIN</scope>
    <scope>IDENTIFICATION OF RECEPTOR</scope>
</reference>
<reference key="19">
    <citation type="journal article" date="2009" name="Blood">
        <title>Role of tyrosine phosphatase SHP-1 in the mechanism of endorepellin angiostatic activity.</title>
        <authorList>
            <person name="Nystrom A."/>
            <person name="Shaik Z.P."/>
            <person name="Gullberg D."/>
            <person name="Krieg T."/>
            <person name="Eckes B."/>
            <person name="Zent R."/>
            <person name="Pozzi A."/>
            <person name="Iozzo R.V."/>
        </authorList>
    </citation>
    <scope>FUNCTION</scope>
</reference>
<reference key="20">
    <citation type="journal article" date="2009" name="J. Proteome Res.">
        <title>Glycoproteomics analysis of human liver tissue by combination of multiple enzyme digestion and hydrazide chemistry.</title>
        <authorList>
            <person name="Chen R."/>
            <person name="Jiang X."/>
            <person name="Sun D."/>
            <person name="Han G."/>
            <person name="Wang F."/>
            <person name="Ye M."/>
            <person name="Wang L."/>
            <person name="Zou H."/>
        </authorList>
    </citation>
    <scope>GLYCOSYLATION [LARGE SCALE ANALYSIS] AT ASN-554; ASN-1755; ASN-3072; ASN-3780; ASN-3836 AND ASN-4068</scope>
    <source>
        <tissue>Liver</tissue>
    </source>
</reference>
<reference key="21">
    <citation type="journal article" date="2012" name="Mol. Cell. Proteomics">
        <title>Human urinary glycoproteomics; attachment site specific analysis of N- and O-linked glycosylations by CID and ECD.</title>
        <authorList>
            <person name="Halim A."/>
            <person name="Nilsson J."/>
            <person name="Ruetschi U."/>
            <person name="Hesse C."/>
            <person name="Larson G."/>
        </authorList>
    </citation>
    <scope>GLYCOSYLATION AT THR-42</scope>
    <scope>STRUCTURE OF CARBOHYDRATES</scope>
    <scope>IDENTIFICATION BY MASS SPECTROMETRY</scope>
</reference>
<reference key="22">
    <citation type="journal article" date="2014" name="J. Proteomics">
        <title>An enzyme assisted RP-RPLC approach for in-depth analysis of human liver phosphoproteome.</title>
        <authorList>
            <person name="Bian Y."/>
            <person name="Song C."/>
            <person name="Cheng K."/>
            <person name="Dong M."/>
            <person name="Wang F."/>
            <person name="Huang J."/>
            <person name="Sun D."/>
            <person name="Wang L."/>
            <person name="Ye M."/>
            <person name="Zou H."/>
        </authorList>
    </citation>
    <scope>IDENTIFICATION BY MASS SPECTROMETRY [LARGE SCALE ANALYSIS]</scope>
    <source>
        <tissue>Liver</tissue>
    </source>
</reference>
<reference key="23">
    <citation type="journal article" date="2015" name="Mol. Cell. Proteomics">
        <title>Identification of chondroitin sulfate linkage region glycopeptides reveals prohormones as a novel class of proteoglycans.</title>
        <authorList>
            <person name="Noborn F."/>
            <person name="Gomez Toledo A."/>
            <person name="Sihlbom C."/>
            <person name="Lengqvist J."/>
            <person name="Fries E."/>
            <person name="Kjellen L."/>
            <person name="Nilsson J."/>
            <person name="Larson G."/>
        </authorList>
    </citation>
    <scope>SUBCELLULAR LOCATION</scope>
    <scope>TISSUE SPECIFICITY</scope>
    <scope>GLYCOSYLATION AT SER-4193</scope>
</reference>
<reference key="24">
    <citation type="journal article" date="2020" name="Glycobiology">
        <title>An affinity chromatography and glycoproteomics workflow to profile the chondroitin sulfate proteoglycans that interact with malarial VAR2CSA in the placenta and in cancer.</title>
        <authorList>
            <person name="Toledo A.G."/>
            <person name="Pihl J."/>
            <person name="Spliid C.B."/>
            <person name="Persson A."/>
            <person name="Nilsson J."/>
            <person name="Pereira M.A."/>
            <person name="Gustavsson T."/>
            <person name="Choudhary S."/>
            <person name="Oo H.Z."/>
            <person name="Black P.C."/>
            <person name="Daugaard M."/>
            <person name="Esko J.D."/>
            <person name="Larson G."/>
            <person name="Salanti A."/>
            <person name="Clausen T.M."/>
        </authorList>
    </citation>
    <scope>GLYCOSYLATION AT SER-4193</scope>
</reference>
<reference key="25">
    <citation type="journal article" date="2022" name="J. Proteins Proteom.">
        <title>Mass spectrometric analysis of chondroitin sulfate-linked peptides.</title>
        <authorList>
            <person name="Ramarajan M.G."/>
            <person name="Saraswat M."/>
            <person name="Budhraja R."/>
            <person name="Garapati K."/>
            <person name="Raymond K."/>
            <person name="Pandey A."/>
        </authorList>
    </citation>
    <scope>SUBCELLULAR LOCATION</scope>
    <scope>TISSUE SPECIFICITY</scope>
    <scope>GLYCOSYLATION AT SER-4193</scope>
</reference>
<reference key="26">
    <citation type="journal article" date="2011" name="J. Mol. Biol.">
        <title>Crystal structure of the LG3 domain of endorepellin, an angiogenesis inhibitor.</title>
        <authorList>
            <person name="Le B.V."/>
            <person name="Kim H."/>
            <person name="Choi J."/>
            <person name="Kim J.H."/>
            <person name="Hahn M.J."/>
            <person name="Lee C."/>
            <person name="Kim K.K."/>
            <person name="Hwang H.Y."/>
        </authorList>
    </citation>
    <scope>X-RAY CRYSTALLOGRAPHY (1.5 ANGSTROMS) OF 4197-4391</scope>
    <scope>DISULFIDE BOND</scope>
    <scope>CALCIUM-BINDING SITES</scope>
</reference>
<proteinExistence type="evidence at protein level"/>
<keyword id="KW-0002">3D-structure</keyword>
<keyword id="KW-0037">Angiogenesis</keyword>
<keyword id="KW-0084">Basement membrane</keyword>
<keyword id="KW-0106">Calcium</keyword>
<keyword id="KW-0903">Direct protein sequencing</keyword>
<keyword id="KW-0225">Disease variant</keyword>
<keyword id="KW-1015">Disulfide bond</keyword>
<keyword id="KW-0245">EGF-like domain</keyword>
<keyword id="KW-0272">Extracellular matrix</keyword>
<keyword id="KW-0325">Glycoprotein</keyword>
<keyword id="KW-0357">Heparan sulfate</keyword>
<keyword id="KW-0393">Immunoglobulin domain</keyword>
<keyword id="KW-0424">Laminin EGF-like domain</keyword>
<keyword id="KW-0479">Metal-binding</keyword>
<keyword id="KW-0654">Proteoglycan</keyword>
<keyword id="KW-1267">Proteomics identification</keyword>
<keyword id="KW-1185">Reference proteome</keyword>
<keyword id="KW-0677">Repeat</keyword>
<keyword id="KW-0964">Secreted</keyword>
<keyword id="KW-0732">Signal</keyword>
<gene>
    <name type="primary">HSPG2</name>
</gene>
<sequence>MGWRAAGALLLALLLHGRLLAVTHGLRAYDGLSLPEDIETVTASQMRWTHSYLSDDEDMLADSISGDDLGSGDLGSGDFQMVYFRALVNFTRSIEYSPQLEDAGSREFREVSEAVVDTLESEYLKIPGDQVVSVVFIKELDGWVFVELDVGSEGNADGAQIQEMLLRVISSGSVASYVTSPQGFQFRRLGTVPQFPRACTEAEFACHSYNECVALEYRCDRRPDCRDMSDELNCEEPVLGISPTFSLLVETTSLPPRPETTIMRQPPVTHAPQPLLPGSVRPLPCGPQEAACRNGHCIPRDYLCDGQEDCEDGSDELDCGPPPPCEPNEFPCGNGHCALKLWRCDGDFDCEDRTDEANCPTKRPEEVCGPTQFRCVSTNMCIPASFHCDEESDCPDRSDEFGCMPPQVVTPPRESIQASRGQTVTFTCVAIGVPTPIINWRLNWGHIPSHPRVTVTSEGGRGTLIIRDVKESDQGAYTCEAMNARGMVFGIPDGVLELVPQRGPCPDGHFYLEHSAACLPCFCFGITSVCQSTRRFRDQIRLRFDQPDDFKGVNVTMPAQPGTPPLSSTQLQIDPSLHEFQLVDLSRRFLVHDSFWALPEQFLGNKVDSYGGSLRYNVRYELARGMLEPVQRPDVVLMGAGYRLLSRGHTPTQPGALNQRQVQFSEEHWVHESGRPVQRAELLQVLQSLEAVLIQTVYNTKMASVGLSDIAMDTTVTHATSHGRAHSVEECRCPIGYSGLSCESCDAHFTRVPGGPYLGTCSGCNCNGHASSCDPVYGHCLNCQHNTEGPQCNKCKAGFFGDAMKATATSCRPCPCPYIDASRRFSDTCFLDTDGQATCDACAPGYTGRRCESCAPGYEGNPIQPGGKCRPVNQEIVRCDERGSMGTSGEACRCKNNVVGRLCNECADGSFHLSTRNPDGCLKCFCMGVSRHCTSSSWSRAQLHGASEEPGHFSLTNAASTHTTNEGIFSPTPGELGFSSFHRLLSGPYFWSLPSRFLGDKVTSYGGELRFTVTQRSQPGSTPLHGQPLVVLQGNNIILEHHVAQEPSPGQPSTFIVPFREQAWQRPDGQPATREHLLMALAGIDTLLIRASYAQQPAESRVSGISMDVAVPEETGQDPALEVEQCSCPPGYRGPSCQDCDTGYTRTPSGLYLGTCERCSCHGHSEACEPETGACQGCQHHTEGPRCEQCQPGYYGDAQRGTPQDCQLCPCYGDPAAGQAAHTCFLDTDGHPTCDACSPGHSGRHCERCAPGYYGNPSQGQPCQRDSQVPGPIGCNCDPQGSVSSQCDAAGQCQCKAQVEGLTCSHCRPHHFHLSASNPDGCLPCFCMGITQQCASSAYTRHLISTHFAPGDFQGFALVNPQRNSRLTGEFTVEPVPEGAQLSFGNFAQLGHESFYWQLPETYQGDKVAAYGGKLRYTLSYTAGPQGSPLSDPDVQITGNNIMLVASQPALQGPERRSYEIMFREEFWRRPDGQPATREHLLMALADLDELLIRATFSSVPLAASISAVSLEVAQPGPSNRPRALEVEECRCPPGYIGLSCQDCAPGYTRTGSGLYLGHCELCECNGHSDLCHPETGACSQCQHNAAGEFCELCAPGYYGDATAGTPEDCQPCACPLTNPENMFSRTCESLGAGGYRCTACEPGYTGQYCEQCGPGYVGNPSVQGGQCLPETNQAPLVVEVHPARSIVPQGGSHSLRCQVSGSPPHYFYWSREDGRPVPSGTQQRHQGSELHFPSVQPSDAGVYICTCRNLHQSNTSRAELLVTEAPSKPITVTVEEQRSQSVRPGADVTFICTAKSKSPAYTLVWTRLHNGKLPTRAMDFNGILTIRNVQLSDAGTYVCTGSNMFAMDQGTATLHVQASGTLSAPVVSIHPPQLTVQPGQLAEFRCSATGSPTPTLEWTGGPGGQLPAKAQIHGGILRLPAVEPTDQAQYLCRAHSSAGQQVARAVLHVHGGGGPRVQVSPERTQVHAGRTVRLYCRAAGVPSATITWRKEGGSLPPQARSERTDIATLLIPAITTADAGFYLCVATSPAGTAQARIQVVVLSASDASPPPVKIESSSPSVTEGQTLDLNCVVAGSAHAQVTWYRRGGSLPPHTQVHGSRLRLPQVSPADSGEYVCRVENGSGPKEASITVSVLHGTHSGPSYTPVPGSTRPIRIEPSSSHVAEGQTLDLNCVVPGQAHAQVTWHKRGGSLPARHQTHGSLLRLHQVTPADSGEYVCHVVGTSGPLEASVLVTIEASVIPGPIPPVRIESSSSTVAEGQTLDLSCVVAGQAHAQVTWYKRGGSLPARHQVRGSRLYIFQASPADAGQYVCRASNGMEASITVTVTGTQGANLAYPAGSTQPIRIEPSSSQVAEGQTLDLNCVVPGQSHAQVTWHKRGGSLPVRHQTHGSLLRLYQASPADSGEYVCRVLGSSVPLEASVLVTIEPAGSVPALGVTPTVRIESSSSQVAEGQTLDLNCLVAGQAHAQVTWHKRGGSLPARHQVHGSRLRLLQVTPADSGEYVCRVVGSSGTQEASVLVTIQQRLSGSHSQGVAYPVRIESSSASLANGHTLDLNCLVASQAPHTITWYKRGGSLPSRHQIVGSRLRIPQVTPADSGEYVCHVSNGAGSRETSLIVTIQGSGSSHVPSVSPPIRIESSSPTVVEGQTLDLNCVVARQPQAIITWYKRGGSLPSRHQTHGSHLRLHQMSVADSGEYVCRANNNIDALEASIVISVSPSAGSPSAPGSSMPIRIESSSSHVAEGETLDLNCVVPGQAHAQVTWHKRGGSLPSHHQTRGSRLRLHHVSPADSGEYVCRVMGSSGPLEASVLVTIEASGSSAVHVPAPGGAPPIRIEPSSSRVAEGQTLDLKCVVPGQAHAQVTWHKRGGNLPARHQVHGPLLRLNQVSPADSGEYSCQVTGSSGTLEASVLVTIEPSSPGPIPAPGLAQPIYIEASSSHVTEGQTLDLNCVVPGQAHAQVTWYKRGGSLPARHQTHGSQLRLHLVSPADSGEYVCRAASGPGPEQEASFTVTVPPSEGSSYRLRSPVISIDPPSSTVQQGQDASFKCLIHDGAAPISLEWKTRNQELEDNVHISPNGSIITIVGTRPSNHGTYRCVASNAYGVAQSVVNLSVHGPPTVSVLPEGPVWVKVGKAVTLECVSAGEPRSSARWTRISSTPAKLEQRTYGLMDSHAVLQISSAKPSDAGTYVCLAQNALGTAQKQVEVIVDTGAMAPGAPQVQAEEAELTVEAGHTATLRCSATGSPAPTIHWSKLRSPLPWQHRLEGDTLIIPRVAQQDSGQYICNATSPAGHAEATIILHVESPPYATTVPEHASVQAGETVQLQCLAHGTPPLTFQWSRVGSSLPGRATARNELLHFERAAPEDSGRYRCRVTNKVGSAEAFAQLLVQGPPGSLPATSIPAGSTPTVQVTPQLETKSIGASVEFHCAVPSDRGTQLRWFKEGGQLPPGHSVQDGVLRIQNLDQSCQGTYICQAHGPWGKAQASAQLVIQALPSVLINIRTSVQTVVVGHAVEFECLALGDPKPQVTWSKVGGHLRPGIVQSGGVVRIAHVELADAGQYRCTATNAAGTTQSHVLLLVQALPQISMPQEVRVPAGSAAVFPCIASGYPTPDISWSKLDGSLPPDSRLENNMLMLPSVRPQDAGTYVCTATNRQGKVKAFAHLQVPERVVPYFTQTPYSFLPLPTIKDAYRKFEIKITFRPDSADGMLLYNGQKRVPGSPTNLANRQPDFISFGLVGGRPEFRFDAGSGMATIRHPTPLALGHFHTVTLLRSLTQGSLIVGDLAPVNGTSQGKFQGLDLNEELYLGGYPDYGAIPKAGLSSGFIGCVRELRIQGEEIVFHDLNLTAHGISHCPTCRDRPCQNGGQCHDSESSSYVCVCPAGFTGSRCEHSQALHCHPEACGPDATCVNRPDGRGYTCRCHLGRSGLRCEEGVTVTTPSLSGAGSYLALPALTNTHHELRLDVEFKPLAPDGVLLFSGGKSGPVEDFVSLAMVGGHLEFRYELGSGLAVLRSAEPLALGRWHRVSAERLNKDGSLRVNGGRPVLRSSPGKSQGLNLHTLLYLGGVEPSVPLSPATNMSAHFRGCVGEVSVNGKRLDLTYSFLGSQGIGQCYDSSPCERQPCQHGATCMPAGEYEFQCLCRDGFKGDLCEHEENPCQLREPCLHGGTCQGTRCLCLPGFSGPRCQQGSGHGIAESDWHLEGSGGNDAPGQYGAYFHDDGFLAFPGHVFSRSLPEVPETIELEVRTSTASGLLLWQGVEVGEAGQGKDFISLGLQDGHLVFRYQLGSGEARLVSEDPINDGEWHRVTALREGRRGSIQVDGEELVSGRSPGPNVAVNAKGSVYIGGAPDVATLTGGRFSSGITGCVKNLVLHSARPGAPPPQPLDLQHRAQAGANTRPCPS</sequence>
<feature type="signal peptide" evidence="3">
    <location>
        <begin position="1"/>
        <end position="21"/>
    </location>
</feature>
<feature type="chain" id="PRO_0000026696" description="Basement membrane-specific heparan sulfate proteoglycan core protein">
    <location>
        <begin position="22"/>
        <end position="4391"/>
    </location>
</feature>
<feature type="chain" id="PRO_0000391621" description="Endorepellin">
    <location>
        <begin position="3687"/>
        <end position="4391"/>
    </location>
</feature>
<feature type="chain" id="PRO_0000391622" description="LG3 peptide">
    <location>
        <begin position="4197"/>
        <end position="4391"/>
    </location>
</feature>
<feature type="domain" description="SEA" evidence="7">
    <location>
        <begin position="80"/>
        <end position="191"/>
    </location>
</feature>
<feature type="domain" description="LDL-receptor class A 1" evidence="6">
    <location>
        <begin position="198"/>
        <end position="235"/>
    </location>
</feature>
<feature type="domain" description="LDL-receptor class A 2" evidence="6">
    <location>
        <begin position="284"/>
        <end position="320"/>
    </location>
</feature>
<feature type="domain" description="LDL-receptor class A 3" evidence="6">
    <location>
        <begin position="324"/>
        <end position="360"/>
    </location>
</feature>
<feature type="domain" description="LDL-receptor class A 4" evidence="6">
    <location>
        <begin position="367"/>
        <end position="404"/>
    </location>
</feature>
<feature type="domain" description="Ig-like C2-type 1">
    <location>
        <begin position="405"/>
        <end position="504"/>
    </location>
</feature>
<feature type="domain" description="Laminin EGF-like 1; first part" evidence="9">
    <location>
        <begin position="521"/>
        <end position="530"/>
    </location>
</feature>
<feature type="domain" description="Laminin IV type A 1" evidence="8">
    <location>
        <begin position="538"/>
        <end position="730"/>
    </location>
</feature>
<feature type="domain" description="Laminin EGF-like 1; second part" evidence="9">
    <location>
        <begin position="731"/>
        <end position="763"/>
    </location>
</feature>
<feature type="domain" description="Laminin EGF-like 2" evidence="9">
    <location>
        <begin position="764"/>
        <end position="813"/>
    </location>
</feature>
<feature type="domain" description="Laminin EGF-like 3" evidence="9">
    <location>
        <begin position="814"/>
        <end position="871"/>
    </location>
</feature>
<feature type="domain" description="Laminin EGF-like 4; truncated" evidence="9">
    <location>
        <begin position="879"/>
        <end position="923"/>
    </location>
</feature>
<feature type="domain" description="Laminin EGF-like 5; first part" evidence="9">
    <location>
        <begin position="924"/>
        <end position="933"/>
    </location>
</feature>
<feature type="domain" description="Laminin IV type A 2" evidence="8">
    <location>
        <begin position="941"/>
        <end position="1125"/>
    </location>
</feature>
<feature type="domain" description="Laminin EGF-like 5; second part" evidence="9">
    <location>
        <begin position="1126"/>
        <end position="1158"/>
    </location>
</feature>
<feature type="domain" description="Laminin EGF-like 6" evidence="9">
    <location>
        <begin position="1159"/>
        <end position="1208"/>
    </location>
</feature>
<feature type="domain" description="Laminin EGF-like 7" evidence="9">
    <location>
        <begin position="1209"/>
        <end position="1265"/>
    </location>
</feature>
<feature type="domain" description="Laminin EGF-like 8" evidence="9">
    <location>
        <begin position="1275"/>
        <end position="1324"/>
    </location>
</feature>
<feature type="domain" description="Laminin EGF-like 9; first part" evidence="9">
    <location>
        <begin position="1325"/>
        <end position="1334"/>
    </location>
</feature>
<feature type="domain" description="Laminin IV type A 3" evidence="8">
    <location>
        <begin position="1344"/>
        <end position="1529"/>
    </location>
</feature>
<feature type="domain" description="Laminin EGF-like 9; second part" evidence="9">
    <location>
        <begin position="1530"/>
        <end position="1562"/>
    </location>
</feature>
<feature type="domain" description="Laminin EGF-like 10" evidence="9">
    <location>
        <begin position="1563"/>
        <end position="1612"/>
    </location>
</feature>
<feature type="domain" description="Laminin EGF-like 11" evidence="9">
    <location>
        <begin position="1613"/>
        <end position="1670"/>
    </location>
</feature>
<feature type="domain" description="Ig-like C2-type 2">
    <location>
        <begin position="1677"/>
        <end position="1771"/>
    </location>
</feature>
<feature type="domain" description="Ig-like C2-type 3">
    <location>
        <begin position="1772"/>
        <end position="1865"/>
    </location>
</feature>
<feature type="domain" description="Ig-like C2-type 4">
    <location>
        <begin position="1866"/>
        <end position="1955"/>
    </location>
</feature>
<feature type="domain" description="Ig-like C2-type 5">
    <location>
        <begin position="1956"/>
        <end position="2051"/>
    </location>
</feature>
<feature type="domain" description="Ig-like C2-type 6">
    <location>
        <begin position="2052"/>
        <end position="2151"/>
    </location>
</feature>
<feature type="domain" description="Ig-like C2-type 7">
    <location>
        <begin position="2152"/>
        <end position="2244"/>
    </location>
</feature>
<feature type="domain" description="Ig-like C2-type 8">
    <location>
        <begin position="2245"/>
        <end position="2340"/>
    </location>
</feature>
<feature type="domain" description="Ig-like C2-type 9">
    <location>
        <begin position="2341"/>
        <end position="2436"/>
    </location>
</feature>
<feature type="domain" description="Ig-like C2-type 10">
    <location>
        <begin position="2437"/>
        <end position="2533"/>
    </location>
</feature>
<feature type="domain" description="Ig-like C2-type 11">
    <location>
        <begin position="2534"/>
        <end position="2629"/>
    </location>
</feature>
<feature type="domain" description="Ig-like C2-type 12">
    <location>
        <begin position="2630"/>
        <end position="2726"/>
    </location>
</feature>
<feature type="domain" description="Ig-like C2-type 13">
    <location>
        <begin position="2727"/>
        <end position="2826"/>
    </location>
</feature>
<feature type="domain" description="Ig-like C2-type 14">
    <location>
        <begin position="2827"/>
        <end position="2924"/>
    </location>
</feature>
<feature type="domain" description="Ig-like C2-type 15">
    <location>
        <begin position="2925"/>
        <end position="3021"/>
    </location>
</feature>
<feature type="domain" description="Ig-like C2-type 16">
    <location>
        <begin position="3022"/>
        <end position="3112"/>
    </location>
</feature>
<feature type="domain" description="Ig-like C2-type 17">
    <location>
        <begin position="3113"/>
        <end position="3211"/>
    </location>
</feature>
<feature type="domain" description="Ig-like C2-type 18">
    <location>
        <begin position="3212"/>
        <end position="3298"/>
    </location>
</feature>
<feature type="domain" description="Ig-like C2-type 19">
    <location>
        <begin position="3299"/>
        <end position="3399"/>
    </location>
</feature>
<feature type="domain" description="Ig-like C2-type 20">
    <location>
        <begin position="3400"/>
        <end position="3488"/>
    </location>
</feature>
<feature type="domain" description="Ig-like C2-type 21">
    <location>
        <begin position="3489"/>
        <end position="3574"/>
    </location>
</feature>
<feature type="domain" description="Ig-like C2-type 22">
    <location>
        <begin position="3575"/>
        <end position="3662"/>
    </location>
</feature>
<feature type="domain" description="Laminin G-like 1" evidence="5">
    <location>
        <begin position="3663"/>
        <end position="3843"/>
    </location>
</feature>
<feature type="domain" description="EGF-like 1" evidence="4">
    <location>
        <begin position="3844"/>
        <end position="3881"/>
    </location>
</feature>
<feature type="domain" description="EGF-like 2" evidence="4">
    <location>
        <begin position="3884"/>
        <end position="3922"/>
    </location>
</feature>
<feature type="domain" description="Laminin G-like 2" evidence="5">
    <location>
        <begin position="3928"/>
        <end position="4103"/>
    </location>
</feature>
<feature type="domain" description="EGF-like 3" evidence="4">
    <location>
        <begin position="4104"/>
        <end position="4141"/>
    </location>
</feature>
<feature type="domain" description="EGF-like 4" evidence="4">
    <location>
        <begin position="4143"/>
        <end position="4176"/>
    </location>
</feature>
<feature type="domain" description="Laminin G-like 3" evidence="5">
    <location>
        <begin position="4201"/>
        <end position="4389"/>
    </location>
</feature>
<feature type="region of interest" description="Disordered" evidence="10">
    <location>
        <begin position="2994"/>
        <end position="3014"/>
    </location>
</feature>
<feature type="region of interest" description="Mediates motor neuron attachment" evidence="3">
    <location>
        <begin position="4149"/>
        <end position="4151"/>
    </location>
</feature>
<feature type="region of interest" description="Mediates motor neuron attachment" evidence="3">
    <location>
        <begin position="4299"/>
        <end position="4301"/>
    </location>
</feature>
<feature type="region of interest" description="Disordered" evidence="10">
    <location>
        <begin position="4364"/>
        <end position="4391"/>
    </location>
</feature>
<feature type="compositionally biased region" description="Polar residues" evidence="10">
    <location>
        <begin position="3003"/>
        <end position="3014"/>
    </location>
</feature>
<feature type="binding site">
    <location>
        <position position="4258"/>
    </location>
    <ligand>
        <name>Ca(2+)</name>
        <dbReference type="ChEBI" id="CHEBI:29108"/>
    </ligand>
</feature>
<feature type="binding site">
    <location>
        <position position="4275"/>
    </location>
    <ligand>
        <name>Ca(2+)</name>
        <dbReference type="ChEBI" id="CHEBI:29108"/>
    </ligand>
</feature>
<feature type="binding site">
    <location>
        <position position="4325"/>
    </location>
    <ligand>
        <name>Ca(2+)</name>
        <dbReference type="ChEBI" id="CHEBI:29108"/>
    </ligand>
</feature>
<feature type="binding site">
    <location>
        <position position="4327"/>
    </location>
    <ligand>
        <name>Ca(2+)</name>
        <dbReference type="ChEBI" id="CHEBI:29108"/>
    </ligand>
</feature>
<feature type="site" description="Cleavage; by BMP1">
    <location>
        <begin position="4196"/>
        <end position="4197"/>
    </location>
</feature>
<feature type="glycosylation site" description="O-linked (GalNAc...) threonine" evidence="24">
    <location>
        <position position="42"/>
    </location>
</feature>
<feature type="glycosylation site" description="O-linked (Xyl...) (heparan sulfate) serine" evidence="3">
    <location>
        <position position="65"/>
    </location>
</feature>
<feature type="glycosylation site" description="O-linked (Xyl...) (heparan sulfate) serine" evidence="3">
    <location>
        <position position="71"/>
    </location>
</feature>
<feature type="glycosylation site" description="O-linked (Xyl...) (heparan sulfate) serine" evidence="3">
    <location>
        <position position="76"/>
    </location>
</feature>
<feature type="glycosylation site" description="N-linked (GlcNAc...) asparagine" evidence="3">
    <location>
        <position position="89"/>
    </location>
</feature>
<feature type="glycosylation site" description="N-linked (GlcNAc...) asparagine" evidence="22">
    <location>
        <position position="554"/>
    </location>
</feature>
<feature type="glycosylation site" description="N-linked (GlcNAc...) asparagine" evidence="20 22">
    <location>
        <position position="1755"/>
    </location>
</feature>
<feature type="glycosylation site" description="N-linked (GlcNAc...) asparagine" evidence="17">
    <location>
        <position position="2121"/>
    </location>
</feature>
<feature type="glycosylation site" description="O-linked (Xyl...) (chondroitin sulfate) serine" evidence="3">
    <location>
        <position position="2995"/>
    </location>
</feature>
<feature type="glycosylation site" description="N-linked (GlcNAc...) asparagine" evidence="22">
    <location>
        <position position="3072"/>
    </location>
</feature>
<feature type="glycosylation site" description="N-linked (GlcNAc...) asparagine" evidence="3">
    <location>
        <position position="3105"/>
    </location>
</feature>
<feature type="glycosylation site" description="N-linked (GlcNAc...) asparagine" evidence="3">
    <location>
        <position position="3279"/>
    </location>
</feature>
<feature type="glycosylation site" description="N-linked (GlcNAc...) asparagine" evidence="22">
    <location>
        <position position="3780"/>
    </location>
</feature>
<feature type="glycosylation site" description="N-linked (GlcNAc...) asparagine" evidence="22">
    <location>
        <position position="3836"/>
    </location>
</feature>
<feature type="glycosylation site" description="O-linked (Xyl...) (chondroitin sulfate) serine" evidence="3">
    <location>
        <position position="3933"/>
    </location>
</feature>
<feature type="glycosylation site" description="N-linked (GlcNAc...) asparagine" evidence="22">
    <location>
        <position position="4068"/>
    </location>
</feature>
<feature type="glycosylation site" description="O-linked (Xyl...) (chondroitin sulfate) serine" evidence="3">
    <location>
        <position position="4179"/>
    </location>
</feature>
<feature type="glycosylation site" description="O-linked (Xyl...) (chondroitin sulfate) serine" evidence="25 26 27">
    <location>
        <position position="4193"/>
    </location>
</feature>
<feature type="disulfide bond" evidence="1">
    <location>
        <begin position="199"/>
        <end position="212"/>
    </location>
</feature>
<feature type="disulfide bond" evidence="1">
    <location>
        <begin position="206"/>
        <end position="225"/>
    </location>
</feature>
<feature type="disulfide bond" evidence="1">
    <location>
        <begin position="219"/>
        <end position="234"/>
    </location>
</feature>
<feature type="disulfide bond" evidence="1">
    <location>
        <begin position="285"/>
        <end position="297"/>
    </location>
</feature>
<feature type="disulfide bond" evidence="1">
    <location>
        <begin position="292"/>
        <end position="310"/>
    </location>
</feature>
<feature type="disulfide bond" evidence="1">
    <location>
        <begin position="304"/>
        <end position="319"/>
    </location>
</feature>
<feature type="disulfide bond" evidence="1">
    <location>
        <begin position="325"/>
        <end position="337"/>
    </location>
</feature>
<feature type="disulfide bond" evidence="1">
    <location>
        <begin position="332"/>
        <end position="350"/>
    </location>
</feature>
<feature type="disulfide bond" evidence="1">
    <location>
        <begin position="344"/>
        <end position="359"/>
    </location>
</feature>
<feature type="disulfide bond" evidence="1">
    <location>
        <begin position="368"/>
        <end position="381"/>
    </location>
</feature>
<feature type="disulfide bond" evidence="1">
    <location>
        <begin position="375"/>
        <end position="394"/>
    </location>
</feature>
<feature type="disulfide bond" evidence="1">
    <location>
        <begin position="388"/>
        <end position="403"/>
    </location>
</feature>
<feature type="disulfide bond" evidence="1">
    <location>
        <begin position="764"/>
        <end position="773"/>
    </location>
</feature>
<feature type="disulfide bond" evidence="1">
    <location>
        <begin position="766"/>
        <end position="780"/>
    </location>
</feature>
<feature type="disulfide bond" evidence="1">
    <location>
        <begin position="783"/>
        <end position="792"/>
    </location>
</feature>
<feature type="disulfide bond" evidence="1">
    <location>
        <begin position="795"/>
        <end position="811"/>
    </location>
</feature>
<feature type="disulfide bond" evidence="1">
    <location>
        <begin position="814"/>
        <end position="829"/>
    </location>
</feature>
<feature type="disulfide bond" evidence="1">
    <location>
        <begin position="816"/>
        <end position="839"/>
    </location>
</feature>
<feature type="disulfide bond" evidence="1">
    <location>
        <begin position="842"/>
        <end position="851"/>
    </location>
</feature>
<feature type="disulfide bond" evidence="1">
    <location>
        <begin position="854"/>
        <end position="869"/>
    </location>
</feature>
<feature type="disulfide bond" evidence="1">
    <location>
        <begin position="879"/>
        <end position="892"/>
    </location>
</feature>
<feature type="disulfide bond" evidence="1">
    <location>
        <begin position="894"/>
        <end position="903"/>
    </location>
</feature>
<feature type="disulfide bond" evidence="1">
    <location>
        <begin position="906"/>
        <end position="921"/>
    </location>
</feature>
<feature type="disulfide bond" evidence="1">
    <location>
        <begin position="1159"/>
        <end position="1168"/>
    </location>
</feature>
<feature type="disulfide bond" evidence="1">
    <location>
        <begin position="1161"/>
        <end position="1175"/>
    </location>
</feature>
<feature type="disulfide bond" evidence="1">
    <location>
        <begin position="1178"/>
        <end position="1187"/>
    </location>
</feature>
<feature type="disulfide bond" evidence="1">
    <location>
        <begin position="1190"/>
        <end position="1206"/>
    </location>
</feature>
<feature type="disulfide bond" evidence="1">
    <location>
        <begin position="1209"/>
        <end position="1224"/>
    </location>
</feature>
<feature type="disulfide bond" evidence="1">
    <location>
        <begin position="1211"/>
        <end position="1234"/>
    </location>
</feature>
<feature type="disulfide bond" evidence="1">
    <location>
        <begin position="1237"/>
        <end position="1246"/>
    </location>
</feature>
<feature type="disulfide bond" evidence="1">
    <location>
        <begin position="1249"/>
        <end position="1263"/>
    </location>
</feature>
<feature type="disulfide bond" evidence="1">
    <location>
        <begin position="1275"/>
        <end position="1287"/>
    </location>
</feature>
<feature type="disulfide bond" evidence="1">
    <location>
        <begin position="1277"/>
        <end position="1293"/>
    </location>
</feature>
<feature type="disulfide bond" evidence="1">
    <location>
        <begin position="1295"/>
        <end position="1304"/>
    </location>
</feature>
<feature type="disulfide bond" evidence="1">
    <location>
        <begin position="1307"/>
        <end position="1322"/>
    </location>
</feature>
<feature type="disulfide bond" evidence="1">
    <location>
        <begin position="1563"/>
        <end position="1572"/>
    </location>
</feature>
<feature type="disulfide bond" evidence="1">
    <location>
        <begin position="1565"/>
        <end position="1579"/>
    </location>
</feature>
<feature type="disulfide bond" evidence="1">
    <location>
        <begin position="1582"/>
        <end position="1591"/>
    </location>
</feature>
<feature type="disulfide bond" evidence="1">
    <location>
        <begin position="1594"/>
        <end position="1610"/>
    </location>
</feature>
<feature type="disulfide bond" evidence="1">
    <location>
        <begin position="1613"/>
        <end position="1628"/>
    </location>
</feature>
<feature type="disulfide bond" evidence="1">
    <location>
        <begin position="1615"/>
        <end position="1638"/>
    </location>
</feature>
<feature type="disulfide bond" evidence="1">
    <location>
        <begin position="1641"/>
        <end position="1650"/>
    </location>
</feature>
<feature type="disulfide bond" evidence="1">
    <location>
        <begin position="1653"/>
        <end position="1668"/>
    </location>
</feature>
<feature type="disulfide bond" evidence="1">
    <location>
        <begin position="3819"/>
        <end position="3845"/>
    </location>
</feature>
<feature type="disulfide bond" evidence="1">
    <location>
        <begin position="3848"/>
        <end position="3859"/>
    </location>
</feature>
<feature type="disulfide bond" evidence="1">
    <location>
        <begin position="3853"/>
        <end position="3869"/>
    </location>
</feature>
<feature type="disulfide bond" evidence="1">
    <location>
        <begin position="3871"/>
        <end position="3880"/>
    </location>
</feature>
<feature type="disulfide bond" evidence="1">
    <location>
        <begin position="3888"/>
        <end position="3899"/>
    </location>
</feature>
<feature type="disulfide bond" evidence="1">
    <location>
        <begin position="3893"/>
        <end position="3910"/>
    </location>
</feature>
<feature type="disulfide bond" evidence="1">
    <location>
        <begin position="3912"/>
        <end position="3921"/>
    </location>
</feature>
<feature type="disulfide bond" evidence="1">
    <location>
        <begin position="4076"/>
        <end position="4102"/>
    </location>
</feature>
<feature type="disulfide bond" evidence="1">
    <location>
        <begin position="4108"/>
        <end position="4119"/>
    </location>
</feature>
<feature type="disulfide bond" evidence="1">
    <location>
        <begin position="4113"/>
        <end position="4129"/>
    </location>
</feature>
<feature type="disulfide bond" evidence="1">
    <location>
        <begin position="4131"/>
        <end position="4140"/>
    </location>
</feature>
<feature type="disulfide bond" evidence="1">
    <location>
        <begin position="4147"/>
        <end position="4159"/>
    </location>
</feature>
<feature type="disulfide bond" evidence="1">
    <location>
        <begin position="4153"/>
        <end position="4164"/>
    </location>
</feature>
<feature type="disulfide bond" evidence="1">
    <location>
        <begin position="4166"/>
        <end position="4175"/>
    </location>
</feature>
<feature type="disulfide bond" evidence="23">
    <location>
        <begin position="4355"/>
        <end position="4389"/>
    </location>
</feature>
<feature type="sequence variant" id="VAR_047979" description="In dbSNP:rs1869780.">
    <original>D</original>
    <variation>E</variation>
    <location>
        <position position="68"/>
    </location>
</feature>
<feature type="sequence variant" id="VAR_057051" description="In dbSNP:rs17460381.">
    <original>L</original>
    <variation>H</variation>
    <location>
        <position position="303"/>
    </location>
</feature>
<feature type="sequence variant" id="VAR_047980" description="In dbSNP:rs1874792." evidence="11 19 21">
    <original>M</original>
    <variation>V</variation>
    <location>
        <position position="638"/>
    </location>
</feature>
<feature type="sequence variant" id="VAR_047981" description="In dbSNP:rs989994." evidence="11 19 21">
    <original>N</original>
    <variation>S</variation>
    <location>
        <position position="765"/>
    </location>
</feature>
<feature type="sequence variant" id="VAR_047982" description="In dbSNP:rs2229481.">
    <original>R</original>
    <variation>Q</variation>
    <location>
        <position position="1186"/>
    </location>
</feature>
<feature type="sequence variant" id="VAR_057052" description="In dbSNP:rs10917058.">
    <original>L</original>
    <variation>V</variation>
    <location>
        <position position="1323"/>
    </location>
</feature>
<feature type="sequence variant" id="VAR_047983" description="In dbSNP:rs897471." evidence="11 19 21">
    <original>A</original>
    <variation>V</variation>
    <location>
        <position position="1503"/>
    </location>
</feature>
<feature type="sequence variant" id="VAR_014122" description="In SJS1; dbSNP:rs137853248." evidence="11">
    <original>C</original>
    <variation>Y</variation>
    <location>
        <position position="1532"/>
    </location>
</feature>
<feature type="sequence variant" id="VAR_047984" description="In dbSNP:rs2229483.">
    <original>R</original>
    <variation>Q</variation>
    <location>
        <position position="1758"/>
    </location>
</feature>
<feature type="sequence variant" id="VAR_047985" description="In dbSNP:rs2229474.">
    <original>R</original>
    <variation>C</variation>
    <location>
        <position position="1919"/>
    </location>
</feature>
<feature type="sequence variant" id="VAR_047986" description="In dbSNP:rs2229475.">
    <original>V</original>
    <variation>I</variation>
    <location>
        <position position="1967"/>
    </location>
</feature>
<feature type="sequence variant" id="VAR_047987" description="In dbSNP:rs2229489." evidence="21">
    <original>L</original>
    <variation>H</variation>
    <location>
        <position position="2980"/>
    </location>
</feature>
<feature type="sequence variant" id="VAR_047988" description="In dbSNP:rs2229490.">
    <original>V</original>
    <variation>I</variation>
    <location>
        <position position="2981"/>
    </location>
</feature>
<feature type="sequence variant" id="VAR_047989" description="In dbSNP:rs2229491." evidence="21">
    <original>S</original>
    <variation>G</variation>
    <location>
        <position position="2995"/>
    </location>
</feature>
<feature type="sequence variant" id="VAR_047990" description="In dbSNP:rs2228349." evidence="21">
    <original>A</original>
    <variation>T</variation>
    <location>
        <position position="3168"/>
    </location>
</feature>
<feature type="sequence variant" id="VAR_047991" description="In dbSNP:rs2291827.">
    <original>H</original>
    <variation>Y</variation>
    <location>
        <position position="3256"/>
    </location>
</feature>
<feature type="sequence variant" id="VAR_047992" description="In dbSNP:rs2270699.">
    <original>R</original>
    <variation>W</variation>
    <location>
        <position position="3530"/>
    </location>
</feature>
<feature type="sequence variant" id="VAR_047993" description="In dbSNP:rs2229493." evidence="21">
    <original>R</original>
    <variation>Q</variation>
    <location>
        <position position="3632"/>
    </location>
</feature>
<feature type="sequence variant" id="VAR_047994" description="In dbSNP:rs17459097.">
    <original>V</original>
    <variation>I</variation>
    <location>
        <position position="3640"/>
    </location>
</feature>
<feature type="sequence variant" id="VAR_047995" description="In dbSNP:rs3736360.">
    <original>S</original>
    <variation>N</variation>
    <location>
        <position position="4331"/>
    </location>
</feature>
<feature type="mutagenesis site" description="Abolishes BMP1-mediated cleavage of endorepellin." evidence="18">
    <original>D</original>
    <variation>I</variation>
    <location>
        <position position="4197"/>
    </location>
</feature>
<feature type="mutagenesis site" description="Retains proper folding. Reduced calcium ion binding." evidence="18">
    <original>D</original>
    <variation>A</variation>
    <location>
        <position position="4258"/>
    </location>
</feature>
<feature type="mutagenesis site" description="Retains proper folding. Reduced calcium ion binding." evidence="18">
    <original>N</original>
    <variation>A</variation>
    <location>
        <position position="4327"/>
    </location>
</feature>
<feature type="sequence conflict" description="In Ref. 2; CAA44373 and 1; AAA52700." evidence="28" ref="2 1">
    <original>A</original>
    <variation>P</variation>
    <location>
        <position position="6"/>
    </location>
</feature>
<feature type="sequence conflict" description="In Ref. 1; AAA52700." evidence="28" ref="1">
    <original>D</original>
    <variation>Y</variation>
    <location>
        <position position="58"/>
    </location>
</feature>
<feature type="sequence conflict" description="In Ref. 2; CAA44373." evidence="28" ref="2">
    <original>TPI</original>
    <variation>APFL</variation>
    <location>
        <begin position="435"/>
        <end position="437"/>
    </location>
</feature>
<feature type="sequence conflict" description="In Ref. 2; CAA44373." evidence="28" ref="2">
    <original>H</original>
    <variation>Q</variation>
    <location>
        <position position="450"/>
    </location>
</feature>
<feature type="sequence conflict" description="In Ref. 2; CAA44373." evidence="28" ref="2">
    <original>R</original>
    <variation>RA</variation>
    <location>
        <position position="502"/>
    </location>
</feature>
<feature type="sequence conflict" description="In Ref. 2; CAA44373." evidence="28" ref="2">
    <original>N</original>
    <variation>K</variation>
    <location>
        <position position="793"/>
    </location>
</feature>
<feature type="sequence conflict" description="In Ref. 6; AAB21121." evidence="28" ref="6">
    <original>EA</original>
    <variation>RT</variation>
    <location>
        <begin position="890"/>
        <end position="891"/>
    </location>
</feature>
<feature type="sequence conflict" description="In Ref. 2; CAA44373 and 6; AAB21121." evidence="28" ref="2 6">
    <original>G</original>
    <variation>R</variation>
    <location>
        <position position="909"/>
    </location>
</feature>
<feature type="sequence conflict" description="In Ref. 6; AAB21121." evidence="28" ref="6">
    <original>V</original>
    <variation>L</variation>
    <location>
        <position position="1102"/>
    </location>
</feature>
<feature type="sequence conflict" description="In Ref. 6; AAB21121." evidence="28" ref="6">
    <original>R</original>
    <variation>L</variation>
    <location>
        <position position="1133"/>
    </location>
</feature>
<feature type="sequence conflict" description="In Ref. 6; AAB21121." evidence="28" ref="6">
    <original>H</original>
    <variation>L</variation>
    <location>
        <position position="1222"/>
    </location>
</feature>
<feature type="sequence conflict" description="In Ref. 7; AAA52699." evidence="28" ref="7">
    <original>D</original>
    <variation>G</variation>
    <location>
        <position position="1406"/>
    </location>
</feature>
<feature type="sequence conflict" description="In Ref. 7; AAA52699." evidence="28" ref="7">
    <original>A</original>
    <variation>G</variation>
    <location>
        <position position="1410"/>
    </location>
</feature>
<feature type="sequence conflict" description="In Ref. 7; AAA52699." evidence="28" ref="7">
    <original>EFWRR</original>
    <variation>LNLRQ</variation>
    <location>
        <begin position="1466"/>
        <end position="1470"/>
    </location>
</feature>
<feature type="sequence conflict" description="In Ref. 2; CAA44373." evidence="28" ref="2">
    <original>SP</original>
    <variation>RG</variation>
    <location>
        <begin position="1703"/>
        <end position="1704"/>
    </location>
</feature>
<feature type="sequence conflict" description="In Ref. 2; CAA44373." evidence="28" ref="2">
    <original>Q</original>
    <variation>R</variation>
    <location>
        <position position="1753"/>
    </location>
</feature>
<feature type="sequence conflict" description="In Ref. 1; AAA52700." evidence="28" ref="1">
    <original>I</original>
    <variation>M</variation>
    <location>
        <position position="2038"/>
    </location>
</feature>
<feature type="sequence conflict" description="In Ref. 2; CAA44373." evidence="28" ref="2">
    <original>P</original>
    <variation>Q</variation>
    <location>
        <position position="2050"/>
    </location>
</feature>
<feature type="sequence conflict" description="In Ref. 1; AAA52700." evidence="28" ref="1">
    <original>P</original>
    <variation>G</variation>
    <location>
        <position position="2052"/>
    </location>
</feature>
<feature type="sequence conflict" description="In Ref. 2; CAA44373." evidence="28" ref="2">
    <original>P</original>
    <variation>H</variation>
    <location>
        <position position="2093"/>
    </location>
</feature>
<feature type="sequence conflict" description="In Ref. 2; CAA44373." evidence="28" ref="2">
    <original>S</original>
    <variation>R</variation>
    <location>
        <position position="2627"/>
    </location>
</feature>
<feature type="sequence conflict" description="In Ref. 2; CAA44373." evidence="28" ref="2">
    <original>H</original>
    <variation>Y</variation>
    <location>
        <position position="2770"/>
    </location>
</feature>
<feature type="sequence conflict" description="In Ref. 2; CAA44373." evidence="28" ref="2">
    <original>P</original>
    <variation>R</variation>
    <location>
        <position position="3241"/>
    </location>
</feature>
<feature type="sequence conflict" description="In Ref. 1; AAA52700." evidence="28" ref="1">
    <original>R</original>
    <variation>Q</variation>
    <location>
        <position position="3427"/>
    </location>
</feature>
<feature type="sequence conflict" description="In Ref. 2; CAA44373." evidence="28" ref="2">
    <original>S</original>
    <variation>T</variation>
    <location>
        <position position="4004"/>
    </location>
</feature>
<feature type="sequence conflict" description="In Ref. 2; CAA44373." evidence="28" ref="2">
    <original>F</original>
    <variation>I</variation>
    <location>
        <position position="4135"/>
    </location>
</feature>
<feature type="sequence conflict" description="In Ref. 2; CAA44373." evidence="28" ref="2">
    <original>V</original>
    <variation>I</variation>
    <location>
        <position position="4332"/>
    </location>
</feature>
<feature type="turn" evidence="29">
    <location>
        <begin position="4199"/>
        <end position="4202"/>
    </location>
</feature>
<feature type="strand" evidence="29">
    <location>
        <begin position="4203"/>
        <end position="4214"/>
    </location>
</feature>
<feature type="helix" evidence="29">
    <location>
        <begin position="4216"/>
        <end position="4219"/>
    </location>
</feature>
<feature type="strand" evidence="29">
    <location>
        <begin position="4228"/>
        <end position="4236"/>
    </location>
</feature>
<feature type="strand" evidence="29">
    <location>
        <begin position="4239"/>
        <end position="4246"/>
    </location>
</feature>
<feature type="strand" evidence="29">
    <location>
        <begin position="4259"/>
        <end position="4265"/>
    </location>
</feature>
<feature type="strand" evidence="29">
    <location>
        <begin position="4268"/>
        <end position="4274"/>
    </location>
</feature>
<feature type="strand" evidence="29">
    <location>
        <begin position="4279"/>
        <end position="4283"/>
    </location>
</feature>
<feature type="strand" evidence="29">
    <location>
        <begin position="4290"/>
        <end position="4292"/>
    </location>
</feature>
<feature type="strand" evidence="29">
    <location>
        <begin position="4294"/>
        <end position="4301"/>
    </location>
</feature>
<feature type="strand" evidence="29">
    <location>
        <begin position="4304"/>
        <end position="4309"/>
    </location>
</feature>
<feature type="strand" evidence="29">
    <location>
        <begin position="4315"/>
        <end position="4318"/>
    </location>
</feature>
<feature type="strand" evidence="30">
    <location>
        <begin position="4320"/>
        <end position="4322"/>
    </location>
</feature>
<feature type="strand" evidence="29">
    <location>
        <begin position="4332"/>
        <end position="4335"/>
    </location>
</feature>
<feature type="helix" evidence="29">
    <location>
        <begin position="4340"/>
        <end position="4343"/>
    </location>
</feature>
<feature type="turn" evidence="29">
    <location>
        <begin position="4344"/>
        <end position="4346"/>
    </location>
</feature>
<feature type="strand" evidence="29">
    <location>
        <begin position="4353"/>
        <end position="4363"/>
    </location>
</feature>
<feature type="strand" evidence="30">
    <location>
        <begin position="4366"/>
        <end position="4368"/>
    </location>
</feature>
<feature type="turn" evidence="29">
    <location>
        <begin position="4376"/>
        <end position="4378"/>
    </location>
</feature>
<feature type="strand" evidence="29">
    <location>
        <begin position="4381"/>
        <end position="4388"/>
    </location>
</feature>
<dbReference type="EMBL" id="M85289">
    <property type="protein sequence ID" value="AAA52700.1"/>
    <property type="molecule type" value="mRNA"/>
</dbReference>
<dbReference type="EMBL" id="X62515">
    <property type="protein sequence ID" value="CAA44373.1"/>
    <property type="molecule type" value="mRNA"/>
</dbReference>
<dbReference type="EMBL" id="AL590556">
    <property type="status" value="NOT_ANNOTATED_CDS"/>
    <property type="molecule type" value="Genomic_DNA"/>
</dbReference>
<dbReference type="EMBL" id="AL590103">
    <property type="status" value="NOT_ANNOTATED_CDS"/>
    <property type="molecule type" value="Genomic_DNA"/>
</dbReference>
<dbReference type="EMBL" id="L22078">
    <property type="status" value="NOT_ANNOTATED_CDS"/>
    <property type="molecule type" value="Genomic_DNA"/>
</dbReference>
<dbReference type="EMBL" id="AL445795">
    <property type="protein sequence ID" value="CAC18534.1"/>
    <property type="molecule type" value="Genomic_DNA"/>
</dbReference>
<dbReference type="EMBL" id="S76436">
    <property type="protein sequence ID" value="AAB21121.2"/>
    <property type="molecule type" value="mRNA"/>
</dbReference>
<dbReference type="EMBL" id="M64283">
    <property type="protein sequence ID" value="AAA52699.1"/>
    <property type="molecule type" value="mRNA"/>
</dbReference>
<dbReference type="CCDS" id="CCDS30625.1"/>
<dbReference type="PIR" id="A38096">
    <property type="entry name" value="A38096"/>
</dbReference>
<dbReference type="RefSeq" id="NP_001278789.1">
    <property type="nucleotide sequence ID" value="NM_001291860.1"/>
</dbReference>
<dbReference type="RefSeq" id="NP_005520.4">
    <property type="nucleotide sequence ID" value="NM_005529.6"/>
</dbReference>
<dbReference type="PDB" id="3SH4">
    <property type="method" value="X-ray"/>
    <property type="resolution" value="1.50 A"/>
    <property type="chains" value="A=4197-4391"/>
</dbReference>
<dbReference type="PDB" id="3SH5">
    <property type="method" value="X-ray"/>
    <property type="resolution" value="2.80 A"/>
    <property type="chains" value="A=4197-4391"/>
</dbReference>
<dbReference type="PDBsum" id="3SH4"/>
<dbReference type="PDBsum" id="3SH5"/>
<dbReference type="SMR" id="P98160"/>
<dbReference type="BioGRID" id="109571">
    <property type="interactions" value="96"/>
</dbReference>
<dbReference type="CORUM" id="P98160"/>
<dbReference type="FunCoup" id="P98160">
    <property type="interactions" value="663"/>
</dbReference>
<dbReference type="IntAct" id="P98160">
    <property type="interactions" value="62"/>
</dbReference>
<dbReference type="MINT" id="P98160"/>
<dbReference type="STRING" id="9606.ENSP00000363827"/>
<dbReference type="ChEMBL" id="CHEMBL5465297"/>
<dbReference type="DrugBank" id="DB16662">
    <property type="generic name" value="Efanesoctocog alfa"/>
</dbReference>
<dbReference type="DrugBank" id="DB00039">
    <property type="generic name" value="Palifermin"/>
</dbReference>
<dbReference type="UniLectin" id="P98160"/>
<dbReference type="CarbonylDB" id="P98160"/>
<dbReference type="GlyConnect" id="653">
    <property type="glycosylation" value="43 N-Linked glycans (5 sites), 4 O-Linked glycans (3 sites)"/>
</dbReference>
<dbReference type="GlyCosmos" id="P98160">
    <property type="glycosylation" value="53 sites, 53 glycans"/>
</dbReference>
<dbReference type="GlyGen" id="P98160">
    <property type="glycosylation" value="77 sites, 169 N-linked glycans (8 sites), 11 O-linked glycans (58 sites)"/>
</dbReference>
<dbReference type="iPTMnet" id="P98160"/>
<dbReference type="PhosphoSitePlus" id="P98160"/>
<dbReference type="SwissPalm" id="P98160"/>
<dbReference type="BioMuta" id="HSPG2"/>
<dbReference type="DMDM" id="317373536"/>
<dbReference type="jPOST" id="P98160"/>
<dbReference type="MassIVE" id="P98160"/>
<dbReference type="PaxDb" id="9606-ENSP00000363827"/>
<dbReference type="PeptideAtlas" id="P98160"/>
<dbReference type="ProteomicsDB" id="57796"/>
<dbReference type="Pumba" id="P98160"/>
<dbReference type="Antibodypedia" id="980">
    <property type="antibodies" value="499 antibodies from 33 providers"/>
</dbReference>
<dbReference type="DNASU" id="3339"/>
<dbReference type="Ensembl" id="ENST00000374695.8">
    <property type="protein sequence ID" value="ENSP00000363827.3"/>
    <property type="gene ID" value="ENSG00000142798.20"/>
</dbReference>
<dbReference type="GeneID" id="3339"/>
<dbReference type="KEGG" id="hsa:3339"/>
<dbReference type="MANE-Select" id="ENST00000374695.8">
    <property type="protein sequence ID" value="ENSP00000363827.3"/>
    <property type="RefSeq nucleotide sequence ID" value="NM_005529.7"/>
    <property type="RefSeq protein sequence ID" value="NP_005520.4"/>
</dbReference>
<dbReference type="UCSC" id="uc001bfj.4">
    <property type="organism name" value="human"/>
</dbReference>
<dbReference type="AGR" id="HGNC:5273"/>
<dbReference type="CTD" id="3339"/>
<dbReference type="DisGeNET" id="3339"/>
<dbReference type="GeneCards" id="HSPG2"/>
<dbReference type="HGNC" id="HGNC:5273">
    <property type="gene designation" value="HSPG2"/>
</dbReference>
<dbReference type="HPA" id="ENSG00000142798">
    <property type="expression patterns" value="Low tissue specificity"/>
</dbReference>
<dbReference type="MalaCards" id="HSPG2"/>
<dbReference type="MIM" id="142461">
    <property type="type" value="gene"/>
</dbReference>
<dbReference type="MIM" id="224410">
    <property type="type" value="phenotype"/>
</dbReference>
<dbReference type="MIM" id="255800">
    <property type="type" value="phenotype"/>
</dbReference>
<dbReference type="neXtProt" id="NX_P98160"/>
<dbReference type="OpenTargets" id="ENSG00000142798"/>
<dbReference type="Orphanet" id="1606">
    <property type="disease" value="1p36 deletion syndrome"/>
</dbReference>
<dbReference type="Orphanet" id="1865">
    <property type="disease" value="Dyssegmental dysplasia, Silverman-Handmaker type"/>
</dbReference>
<dbReference type="Orphanet" id="800">
    <property type="disease" value="Schwartz-Jampel syndrome"/>
</dbReference>
<dbReference type="PharmGKB" id="PA29537"/>
<dbReference type="VEuPathDB" id="HostDB:ENSG00000142798"/>
<dbReference type="eggNOG" id="KOG3509">
    <property type="taxonomic scope" value="Eukaryota"/>
</dbReference>
<dbReference type="GeneTree" id="ENSGT00940000156670"/>
<dbReference type="HOGENOM" id="CLU_000078_1_0_1"/>
<dbReference type="InParanoid" id="P98160"/>
<dbReference type="OMA" id="ISCFCAG"/>
<dbReference type="OrthoDB" id="10055367at2759"/>
<dbReference type="PAN-GO" id="P98160">
    <property type="GO annotations" value="3 GO annotations based on evolutionary models"/>
</dbReference>
<dbReference type="PhylomeDB" id="P98160"/>
<dbReference type="TreeFam" id="TF326548"/>
<dbReference type="PathwayCommons" id="P98160"/>
<dbReference type="Reactome" id="R-HSA-1474228">
    <property type="pathway name" value="Degradation of the extracellular matrix"/>
</dbReference>
<dbReference type="Reactome" id="R-HSA-1971475">
    <property type="pathway name" value="A tetrasaccharide linker sequence is required for GAG synthesis"/>
</dbReference>
<dbReference type="Reactome" id="R-HSA-2022928">
    <property type="pathway name" value="HS-GAG biosynthesis"/>
</dbReference>
<dbReference type="Reactome" id="R-HSA-2024096">
    <property type="pathway name" value="HS-GAG degradation"/>
</dbReference>
<dbReference type="Reactome" id="R-HSA-216083">
    <property type="pathway name" value="Integrin cell surface interactions"/>
</dbReference>
<dbReference type="Reactome" id="R-HSA-3000157">
    <property type="pathway name" value="Laminin interactions"/>
</dbReference>
<dbReference type="Reactome" id="R-HSA-3000171">
    <property type="pathway name" value="Non-integrin membrane-ECM interactions"/>
</dbReference>
<dbReference type="Reactome" id="R-HSA-3000178">
    <property type="pathway name" value="ECM proteoglycans"/>
</dbReference>
<dbReference type="Reactome" id="R-HSA-3560783">
    <property type="pathway name" value="Defective B4GALT7 causes EDS, progeroid type"/>
</dbReference>
<dbReference type="Reactome" id="R-HSA-3560801">
    <property type="pathway name" value="Defective B3GAT3 causes JDSSDHD"/>
</dbReference>
<dbReference type="Reactome" id="R-HSA-3656237">
    <property type="pathway name" value="Defective EXT2 causes exostoses 2"/>
</dbReference>
<dbReference type="Reactome" id="R-HSA-3656253">
    <property type="pathway name" value="Defective EXT1 causes exostoses 1, TRPS2 and CHDS"/>
</dbReference>
<dbReference type="Reactome" id="R-HSA-4420332">
    <property type="pathway name" value="Defective B3GALT6 causes EDSP2 and SEMDJL1"/>
</dbReference>
<dbReference type="Reactome" id="R-HSA-9694614">
    <property type="pathway name" value="Attachment and Entry"/>
</dbReference>
<dbReference type="Reactome" id="R-HSA-975634">
    <property type="pathway name" value="Retinoid metabolism and transport"/>
</dbReference>
<dbReference type="Reactome" id="R-HSA-977225">
    <property type="pathway name" value="Amyloid fiber formation"/>
</dbReference>
<dbReference type="Reactome" id="R-HSA-9820960">
    <property type="pathway name" value="Respiratory syncytial virus (RSV) attachment and entry"/>
</dbReference>
<dbReference type="Reactome" id="R-HSA-9833110">
    <property type="pathway name" value="RSV-host interactions"/>
</dbReference>
<dbReference type="Reactome" id="R-HSA-9856532">
    <property type="pathway name" value="Mechanical load activates signaling by PIEZO1 and integrins in osteocytes"/>
</dbReference>
<dbReference type="Reactome" id="R-HSA-9913351">
    <property type="pathway name" value="Formation of the dystrophin-glycoprotein complex (DGC)"/>
</dbReference>
<dbReference type="SignaLink" id="P98160"/>
<dbReference type="SIGNOR" id="P98160"/>
<dbReference type="BioGRID-ORCS" id="3339">
    <property type="hits" value="9 hits in 1151 CRISPR screens"/>
</dbReference>
<dbReference type="ChiTaRS" id="HSPG2">
    <property type="organism name" value="human"/>
</dbReference>
<dbReference type="EvolutionaryTrace" id="P98160"/>
<dbReference type="GeneWiki" id="Perlecan"/>
<dbReference type="GenomeRNAi" id="3339"/>
<dbReference type="Pharos" id="P98160">
    <property type="development level" value="Tbio"/>
</dbReference>
<dbReference type="PRO" id="PR:P98160"/>
<dbReference type="Proteomes" id="UP000005640">
    <property type="component" value="Chromosome 1"/>
</dbReference>
<dbReference type="RNAct" id="P98160">
    <property type="molecule type" value="protein"/>
</dbReference>
<dbReference type="Bgee" id="ENSG00000142798">
    <property type="expression patterns" value="Expressed in saphenous vein and 193 other cell types or tissues"/>
</dbReference>
<dbReference type="ExpressionAtlas" id="P98160">
    <property type="expression patterns" value="baseline and differential"/>
</dbReference>
<dbReference type="GO" id="GO:0005604">
    <property type="term" value="C:basement membrane"/>
    <property type="evidence" value="ECO:0000304"/>
    <property type="project" value="ARUK-UCL"/>
</dbReference>
<dbReference type="GO" id="GO:0062023">
    <property type="term" value="C:collagen-containing extracellular matrix"/>
    <property type="evidence" value="ECO:0007005"/>
    <property type="project" value="UniProtKB"/>
</dbReference>
<dbReference type="GO" id="GO:0070062">
    <property type="term" value="C:extracellular exosome"/>
    <property type="evidence" value="ECO:0007005"/>
    <property type="project" value="UniProtKB"/>
</dbReference>
<dbReference type="GO" id="GO:0005576">
    <property type="term" value="C:extracellular region"/>
    <property type="evidence" value="ECO:0007005"/>
    <property type="project" value="BHF-UCL"/>
</dbReference>
<dbReference type="GO" id="GO:0005615">
    <property type="term" value="C:extracellular space"/>
    <property type="evidence" value="ECO:0007005"/>
    <property type="project" value="UniProtKB"/>
</dbReference>
<dbReference type="GO" id="GO:0005925">
    <property type="term" value="C:focal adhesion"/>
    <property type="evidence" value="ECO:0007005"/>
    <property type="project" value="UniProtKB"/>
</dbReference>
<dbReference type="GO" id="GO:0005796">
    <property type="term" value="C:Golgi lumen"/>
    <property type="evidence" value="ECO:0000304"/>
    <property type="project" value="Reactome"/>
</dbReference>
<dbReference type="GO" id="GO:0043202">
    <property type="term" value="C:lysosomal lumen"/>
    <property type="evidence" value="ECO:0000304"/>
    <property type="project" value="Reactome"/>
</dbReference>
<dbReference type="GO" id="GO:0043005">
    <property type="term" value="C:neuron projection"/>
    <property type="evidence" value="ECO:0000318"/>
    <property type="project" value="GO_Central"/>
</dbReference>
<dbReference type="GO" id="GO:0005886">
    <property type="term" value="C:plasma membrane"/>
    <property type="evidence" value="ECO:0000304"/>
    <property type="project" value="Reactome"/>
</dbReference>
<dbReference type="GO" id="GO:0098797">
    <property type="term" value="C:plasma membrane protein complex"/>
    <property type="evidence" value="ECO:0000304"/>
    <property type="project" value="ARUK-UCL"/>
</dbReference>
<dbReference type="GO" id="GO:0001540">
    <property type="term" value="F:amyloid-beta binding"/>
    <property type="evidence" value="ECO:0000305"/>
    <property type="project" value="ARUK-UCL"/>
</dbReference>
<dbReference type="GO" id="GO:0005509">
    <property type="term" value="F:calcium ion binding"/>
    <property type="evidence" value="ECO:0007669"/>
    <property type="project" value="InterPro"/>
</dbReference>
<dbReference type="GO" id="GO:0070052">
    <property type="term" value="F:collagen V binding"/>
    <property type="evidence" value="ECO:0007669"/>
    <property type="project" value="Ensembl"/>
</dbReference>
<dbReference type="GO" id="GO:0030021">
    <property type="term" value="F:extracellular matrix structural constituent conferring compression resistance"/>
    <property type="evidence" value="ECO:0000250"/>
    <property type="project" value="BHF-UCL"/>
</dbReference>
<dbReference type="GO" id="GO:0050750">
    <property type="term" value="F:low-density lipoprotein particle receptor binding"/>
    <property type="evidence" value="ECO:0000304"/>
    <property type="project" value="ARUK-UCL"/>
</dbReference>
<dbReference type="GO" id="GO:0001525">
    <property type="term" value="P:angiogenesis"/>
    <property type="evidence" value="ECO:0007669"/>
    <property type="project" value="UniProtKB-KW"/>
</dbReference>
<dbReference type="GO" id="GO:0031100">
    <property type="term" value="P:animal organ regeneration"/>
    <property type="evidence" value="ECO:0007669"/>
    <property type="project" value="Ensembl"/>
</dbReference>
<dbReference type="GO" id="GO:0007420">
    <property type="term" value="P:brain development"/>
    <property type="evidence" value="ECO:0000304"/>
    <property type="project" value="ARUK-UCL"/>
</dbReference>
<dbReference type="GO" id="GO:0030154">
    <property type="term" value="P:cell differentiation"/>
    <property type="evidence" value="ECO:0000304"/>
    <property type="project" value="ARUK-UCL"/>
</dbReference>
<dbReference type="GO" id="GO:0072359">
    <property type="term" value="P:circulatory system development"/>
    <property type="evidence" value="ECO:0000304"/>
    <property type="project" value="ARUK-UCL"/>
</dbReference>
<dbReference type="GO" id="GO:0007566">
    <property type="term" value="P:embryo implantation"/>
    <property type="evidence" value="ECO:0007669"/>
    <property type="project" value="Ensembl"/>
</dbReference>
<dbReference type="GO" id="GO:0006954">
    <property type="term" value="P:inflammatory response"/>
    <property type="evidence" value="ECO:0000304"/>
    <property type="project" value="ARUK-UCL"/>
</dbReference>
<dbReference type="GO" id="GO:0006629">
    <property type="term" value="P:lipid metabolic process"/>
    <property type="evidence" value="ECO:0000304"/>
    <property type="project" value="ARUK-UCL"/>
</dbReference>
<dbReference type="GO" id="GO:0016525">
    <property type="term" value="P:negative regulation of angiogenesis"/>
    <property type="evidence" value="ECO:0000304"/>
    <property type="project" value="ARUK-UCL"/>
</dbReference>
<dbReference type="GO" id="GO:0007162">
    <property type="term" value="P:negative regulation of cell adhesion"/>
    <property type="evidence" value="ECO:0007669"/>
    <property type="project" value="Ensembl"/>
</dbReference>
<dbReference type="GO" id="GO:0008285">
    <property type="term" value="P:negative regulation of cell population proliferation"/>
    <property type="evidence" value="ECO:0007669"/>
    <property type="project" value="Ensembl"/>
</dbReference>
<dbReference type="GO" id="GO:0001938">
    <property type="term" value="P:positive regulation of endothelial cell proliferation"/>
    <property type="evidence" value="ECO:0007669"/>
    <property type="project" value="Ensembl"/>
</dbReference>
<dbReference type="GO" id="GO:0006898">
    <property type="term" value="P:receptor-mediated endocytosis"/>
    <property type="evidence" value="ECO:0000250"/>
    <property type="project" value="ARUK-UCL"/>
</dbReference>
<dbReference type="GO" id="GO:0001666">
    <property type="term" value="P:response to hypoxia"/>
    <property type="evidence" value="ECO:0007669"/>
    <property type="project" value="Ensembl"/>
</dbReference>
<dbReference type="GO" id="GO:0009410">
    <property type="term" value="P:response to xenobiotic stimulus"/>
    <property type="evidence" value="ECO:0007669"/>
    <property type="project" value="Ensembl"/>
</dbReference>
<dbReference type="GO" id="GO:0007224">
    <property type="term" value="P:smoothened signaling pathway"/>
    <property type="evidence" value="ECO:0007669"/>
    <property type="project" value="Ensembl"/>
</dbReference>
<dbReference type="CDD" id="cd00054">
    <property type="entry name" value="EGF_CA"/>
    <property type="match status" value="4"/>
</dbReference>
<dbReference type="CDD" id="cd00055">
    <property type="entry name" value="EGF_Lam"/>
    <property type="match status" value="8"/>
</dbReference>
<dbReference type="CDD" id="cd00096">
    <property type="entry name" value="Ig"/>
    <property type="match status" value="6"/>
</dbReference>
<dbReference type="CDD" id="cd05743">
    <property type="entry name" value="Ig_Perlecan_like"/>
    <property type="match status" value="1"/>
</dbReference>
<dbReference type="CDD" id="cd05754">
    <property type="entry name" value="IgI_Perlecan_like"/>
    <property type="match status" value="1"/>
</dbReference>
<dbReference type="CDD" id="cd00110">
    <property type="entry name" value="LamG"/>
    <property type="match status" value="3"/>
</dbReference>
<dbReference type="CDD" id="cd00112">
    <property type="entry name" value="LDLa"/>
    <property type="match status" value="4"/>
</dbReference>
<dbReference type="FunFam" id="2.10.25.10:FF:000307">
    <property type="entry name" value="Basement membrane-specific heparan sulfate proteoglycan core protein"/>
    <property type="match status" value="1"/>
</dbReference>
<dbReference type="FunFam" id="2.60.40.10:FF:000349">
    <property type="entry name" value="Basement membrane-specific heparan sulfate proteoglycan core protein"/>
    <property type="match status" value="1"/>
</dbReference>
<dbReference type="FunFam" id="2.60.40.10:FF:000602">
    <property type="entry name" value="Basement membrane-specific heparan sulfate proteoglycan core protein"/>
    <property type="match status" value="1"/>
</dbReference>
<dbReference type="FunFam" id="2.60.40.10:FF:000644">
    <property type="entry name" value="Basement membrane-specific heparan sulfate proteoglycan core protein"/>
    <property type="match status" value="1"/>
</dbReference>
<dbReference type="FunFam" id="2.60.40.10:FF:000700">
    <property type="entry name" value="Basement membrane-specific heparan sulfate proteoglycan core protein"/>
    <property type="match status" value="1"/>
</dbReference>
<dbReference type="FunFam" id="2.60.40.10:FF:000727">
    <property type="entry name" value="Basement membrane-specific heparan sulfate proteoglycan core protein"/>
    <property type="match status" value="1"/>
</dbReference>
<dbReference type="FunFam" id="2.60.40.10:FF:000884">
    <property type="entry name" value="Basement membrane-specific heparan sulfate proteoglycan core protein"/>
    <property type="match status" value="1"/>
</dbReference>
<dbReference type="FunFam" id="2.60.40.10:FF:001022">
    <property type="entry name" value="Basement membrane-specific heparan sulfate proteoglycan core protein"/>
    <property type="match status" value="1"/>
</dbReference>
<dbReference type="FunFam" id="4.10.400.10:FF:000058">
    <property type="entry name" value="Basement membrane-specific heparan sulfate proteoglycan core protein"/>
    <property type="match status" value="1"/>
</dbReference>
<dbReference type="FunFam" id="4.10.400.10:FF:000093">
    <property type="entry name" value="Basement membrane-specific heparan sulfate proteoglycan core protein"/>
    <property type="match status" value="1"/>
</dbReference>
<dbReference type="FunFam" id="2.10.25.10:FF:000298">
    <property type="entry name" value="basement membrane-specific heparan sulfate proteoglycan core protein"/>
    <property type="match status" value="1"/>
</dbReference>
<dbReference type="FunFam" id="2.60.40.10:FF:000067">
    <property type="entry name" value="basement membrane-specific heparan sulfate proteoglycan core protein"/>
    <property type="match status" value="9"/>
</dbReference>
<dbReference type="FunFam" id="2.60.40.10:FF:000709">
    <property type="entry name" value="basement membrane-specific heparan sulfate proteoglycan core protein"/>
    <property type="match status" value="1"/>
</dbReference>
<dbReference type="FunFam" id="4.10.400.10:FF:000127">
    <property type="entry name" value="basement membrane-specific heparan sulfate proteoglycan core protein"/>
    <property type="match status" value="1"/>
</dbReference>
<dbReference type="FunFam" id="2.10.25.10:FF:000185">
    <property type="entry name" value="basement membrane-specific heparan sulfate proteoglycan core protein-like"/>
    <property type="match status" value="1"/>
</dbReference>
<dbReference type="FunFam" id="2.10.25.10:FF:000387">
    <property type="entry name" value="basement membrane-specific heparan sulfate proteoglycan core protein-like"/>
    <property type="match status" value="1"/>
</dbReference>
<dbReference type="FunFam" id="2.60.120.200:FF:000072">
    <property type="entry name" value="basement membrane-specific heparan sulfate proteoglycan core protein-like"/>
    <property type="match status" value="1"/>
</dbReference>
<dbReference type="FunFam" id="2.60.120.200:FF:000076">
    <property type="entry name" value="basement membrane-specific heparan sulfate proteoglycan core protein-like"/>
    <property type="match status" value="1"/>
</dbReference>
<dbReference type="FunFam" id="2.60.120.200:FF:000101">
    <property type="entry name" value="basement membrane-specific heparan sulfate proteoglycan core protein-like"/>
    <property type="match status" value="1"/>
</dbReference>
<dbReference type="FunFam" id="2.60.40.10:FF:000666">
    <property type="entry name" value="basement membrane-specific heparan sulfate proteoglycan core protein-like"/>
    <property type="match status" value="1"/>
</dbReference>
<dbReference type="FunFam" id="2.60.40.10:FF:000685">
    <property type="entry name" value="basement membrane-specific heparan sulfate proteoglycan core protein-like"/>
    <property type="match status" value="1"/>
</dbReference>
<dbReference type="FunFam" id="2.60.40.10:FF:000692">
    <property type="entry name" value="basement membrane-specific heparan sulfate proteoglycan core protein-like"/>
    <property type="match status" value="1"/>
</dbReference>
<dbReference type="FunFam" id="2.10.25.10:FF:000106">
    <property type="entry name" value="Heparan sulfate proteoglycan 2"/>
    <property type="match status" value="3"/>
</dbReference>
<dbReference type="FunFam" id="2.10.25.10:FF:000416">
    <property type="entry name" value="Heparan sulfate proteoglycan 2"/>
    <property type="match status" value="1"/>
</dbReference>
<dbReference type="FunFam" id="2.170.300.10:FF:000012">
    <property type="entry name" value="Heparan sulfate proteoglycan 2"/>
    <property type="match status" value="1"/>
</dbReference>
<dbReference type="FunFam" id="2.60.40.10:FF:000918">
    <property type="entry name" value="Heparan sulfate proteoglycan 2"/>
    <property type="match status" value="1"/>
</dbReference>
<dbReference type="FunFam" id="2.60.40.10:FF:001104">
    <property type="entry name" value="Heparan sulfate proteoglycan 2"/>
    <property type="match status" value="1"/>
</dbReference>
<dbReference type="FunFam" id="4.10.400.10:FF:000088">
    <property type="entry name" value="Heparan sulfate proteoglycan 2"/>
    <property type="match status" value="1"/>
</dbReference>
<dbReference type="FunFam" id="2.10.25.10:FF:000033">
    <property type="entry name" value="Laminin subunit alpha 2"/>
    <property type="match status" value="1"/>
</dbReference>
<dbReference type="FunFam" id="2.10.25.10:FF:000128">
    <property type="entry name" value="laminin subunit alpha-2 isoform X1"/>
    <property type="match status" value="1"/>
</dbReference>
<dbReference type="Gene3D" id="2.60.120.200">
    <property type="match status" value="3"/>
</dbReference>
<dbReference type="Gene3D" id="2.60.40.10">
    <property type="entry name" value="Immunoglobulins"/>
    <property type="match status" value="22"/>
</dbReference>
<dbReference type="Gene3D" id="2.10.25.10">
    <property type="entry name" value="Laminin"/>
    <property type="match status" value="10"/>
</dbReference>
<dbReference type="Gene3D" id="4.10.400.10">
    <property type="entry name" value="Low-density Lipoprotein Receptor"/>
    <property type="match status" value="4"/>
</dbReference>
<dbReference type="Gene3D" id="2.170.300.10">
    <property type="entry name" value="Tie2 ligand-binding domain superfamily"/>
    <property type="match status" value="1"/>
</dbReference>
<dbReference type="InterPro" id="IPR013320">
    <property type="entry name" value="ConA-like_dom_sf"/>
</dbReference>
<dbReference type="InterPro" id="IPR001881">
    <property type="entry name" value="EGF-like_Ca-bd_dom"/>
</dbReference>
<dbReference type="InterPro" id="IPR000742">
    <property type="entry name" value="EGF-like_dom"/>
</dbReference>
<dbReference type="InterPro" id="IPR007110">
    <property type="entry name" value="Ig-like_dom"/>
</dbReference>
<dbReference type="InterPro" id="IPR036179">
    <property type="entry name" value="Ig-like_dom_sf"/>
</dbReference>
<dbReference type="InterPro" id="IPR013783">
    <property type="entry name" value="Ig-like_fold"/>
</dbReference>
<dbReference type="InterPro" id="IPR013098">
    <property type="entry name" value="Ig_I-set"/>
</dbReference>
<dbReference type="InterPro" id="IPR003599">
    <property type="entry name" value="Ig_sub"/>
</dbReference>
<dbReference type="InterPro" id="IPR003598">
    <property type="entry name" value="Ig_sub2"/>
</dbReference>
<dbReference type="InterPro" id="IPR013106">
    <property type="entry name" value="Ig_V-set"/>
</dbReference>
<dbReference type="InterPro" id="IPR001791">
    <property type="entry name" value="Laminin_G"/>
</dbReference>
<dbReference type="InterPro" id="IPR000034">
    <property type="entry name" value="Laminin_IV"/>
</dbReference>
<dbReference type="InterPro" id="IPR036055">
    <property type="entry name" value="LDL_receptor-like_sf"/>
</dbReference>
<dbReference type="InterPro" id="IPR023415">
    <property type="entry name" value="LDLR_class-A_CS"/>
</dbReference>
<dbReference type="InterPro" id="IPR002172">
    <property type="entry name" value="LDrepeatLR_classA_rpt"/>
</dbReference>
<dbReference type="InterPro" id="IPR002049">
    <property type="entry name" value="LE_dom"/>
</dbReference>
<dbReference type="InterPro" id="IPR056863">
    <property type="entry name" value="LMN_ATRN_NET-like_EGF"/>
</dbReference>
<dbReference type="InterPro" id="IPR051170">
    <property type="entry name" value="Neural/epithelial_adhesion"/>
</dbReference>
<dbReference type="InterPro" id="IPR000082">
    <property type="entry name" value="SEA_dom"/>
</dbReference>
<dbReference type="PANTHER" id="PTHR12231">
    <property type="entry name" value="CTX-RELATED TYPE I TRANSMEMBRANE PROTEIN"/>
    <property type="match status" value="1"/>
</dbReference>
<dbReference type="PANTHER" id="PTHR12231:SF253">
    <property type="entry name" value="DPR-INTERACTING PROTEIN ETA, ISOFORM B-RELATED"/>
    <property type="match status" value="1"/>
</dbReference>
<dbReference type="Pfam" id="PF00008">
    <property type="entry name" value="EGF"/>
    <property type="match status" value="2"/>
</dbReference>
<dbReference type="Pfam" id="PF00053">
    <property type="entry name" value="EGF_laminin"/>
    <property type="match status" value="6"/>
</dbReference>
<dbReference type="Pfam" id="PF24973">
    <property type="entry name" value="EGF_LMN_ATRN"/>
    <property type="match status" value="3"/>
</dbReference>
<dbReference type="Pfam" id="PF07679">
    <property type="entry name" value="I-set"/>
    <property type="match status" value="9"/>
</dbReference>
<dbReference type="Pfam" id="PF13895">
    <property type="entry name" value="Ig_2"/>
    <property type="match status" value="1"/>
</dbReference>
<dbReference type="Pfam" id="PF13927">
    <property type="entry name" value="Ig_3"/>
    <property type="match status" value="12"/>
</dbReference>
<dbReference type="Pfam" id="PF00052">
    <property type="entry name" value="Laminin_B"/>
    <property type="match status" value="3"/>
</dbReference>
<dbReference type="Pfam" id="PF00054">
    <property type="entry name" value="Laminin_G_1"/>
    <property type="match status" value="3"/>
</dbReference>
<dbReference type="Pfam" id="PF00057">
    <property type="entry name" value="Ldl_recept_a"/>
    <property type="match status" value="4"/>
</dbReference>
<dbReference type="PRINTS" id="PR00261">
    <property type="entry name" value="LDLRECEPTOR"/>
</dbReference>
<dbReference type="SMART" id="SM00181">
    <property type="entry name" value="EGF"/>
    <property type="match status" value="11"/>
</dbReference>
<dbReference type="SMART" id="SM00179">
    <property type="entry name" value="EGF_CA"/>
    <property type="match status" value="5"/>
</dbReference>
<dbReference type="SMART" id="SM00180">
    <property type="entry name" value="EGF_Lam"/>
    <property type="match status" value="9"/>
</dbReference>
<dbReference type="SMART" id="SM00409">
    <property type="entry name" value="IG"/>
    <property type="match status" value="22"/>
</dbReference>
<dbReference type="SMART" id="SM00408">
    <property type="entry name" value="IGc2"/>
    <property type="match status" value="22"/>
</dbReference>
<dbReference type="SMART" id="SM00406">
    <property type="entry name" value="IGv"/>
    <property type="match status" value="8"/>
</dbReference>
<dbReference type="SMART" id="SM00281">
    <property type="entry name" value="LamB"/>
    <property type="match status" value="3"/>
</dbReference>
<dbReference type="SMART" id="SM00282">
    <property type="entry name" value="LamG"/>
    <property type="match status" value="3"/>
</dbReference>
<dbReference type="SMART" id="SM00192">
    <property type="entry name" value="LDLa"/>
    <property type="match status" value="4"/>
</dbReference>
<dbReference type="SMART" id="SM00200">
    <property type="entry name" value="SEA"/>
    <property type="match status" value="1"/>
</dbReference>
<dbReference type="SUPFAM" id="SSF49899">
    <property type="entry name" value="Concanavalin A-like lectins/glucanases"/>
    <property type="match status" value="3"/>
</dbReference>
<dbReference type="SUPFAM" id="SSF57196">
    <property type="entry name" value="EGF/Laminin"/>
    <property type="match status" value="8"/>
</dbReference>
<dbReference type="SUPFAM" id="SSF48726">
    <property type="entry name" value="Immunoglobulin"/>
    <property type="match status" value="22"/>
</dbReference>
<dbReference type="SUPFAM" id="SSF57424">
    <property type="entry name" value="LDL receptor-like module"/>
    <property type="match status" value="4"/>
</dbReference>
<dbReference type="PROSITE" id="PS00022">
    <property type="entry name" value="EGF_1"/>
    <property type="match status" value="9"/>
</dbReference>
<dbReference type="PROSITE" id="PS01186">
    <property type="entry name" value="EGF_2"/>
    <property type="match status" value="6"/>
</dbReference>
<dbReference type="PROSITE" id="PS50026">
    <property type="entry name" value="EGF_3"/>
    <property type="match status" value="4"/>
</dbReference>
<dbReference type="PROSITE" id="PS01248">
    <property type="entry name" value="EGF_LAM_1"/>
    <property type="match status" value="11"/>
</dbReference>
<dbReference type="PROSITE" id="PS50027">
    <property type="entry name" value="EGF_LAM_2"/>
    <property type="match status" value="8"/>
</dbReference>
<dbReference type="PROSITE" id="PS50835">
    <property type="entry name" value="IG_LIKE"/>
    <property type="match status" value="22"/>
</dbReference>
<dbReference type="PROSITE" id="PS50025">
    <property type="entry name" value="LAM_G_DOMAIN"/>
    <property type="match status" value="3"/>
</dbReference>
<dbReference type="PROSITE" id="PS51115">
    <property type="entry name" value="LAMININ_IVA"/>
    <property type="match status" value="3"/>
</dbReference>
<dbReference type="PROSITE" id="PS01209">
    <property type="entry name" value="LDLRA_1"/>
    <property type="match status" value="4"/>
</dbReference>
<dbReference type="PROSITE" id="PS50068">
    <property type="entry name" value="LDLRA_2"/>
    <property type="match status" value="4"/>
</dbReference>
<dbReference type="PROSITE" id="PS50024">
    <property type="entry name" value="SEA"/>
    <property type="match status" value="1"/>
</dbReference>
<accession>P98160</accession>
<accession>Q16287</accession>
<accession>Q5SZI3</accession>
<accession>Q9H3V5</accession>
<comment type="function">
    <text>Integral component of basement membranes. Component of the glomerular basement membrane (GBM), responsible for the fixed negative electrostatic membrane charge, and which provides a barrier which is both size- and charge-selective. It serves as an attachment substrate for cells. Plays essential roles in vascularization. Critical for normal heart development and for regulating the vascular response to injury. Also required for avascular cartilage development.</text>
</comment>
<comment type="function">
    <molecule>Endorepellin</molecule>
    <text>Anti-angiogenic and anti-tumor peptide that inhibits endothelial cell migration, collagen-induced endothelial tube morphogenesis and blood vessel growth in the chorioallantoic membrane. Blocks endothelial cell adhesion to fibronectin and type I collagen. Anti-tumor agent in neovascularization. Interaction with its ligand, integrin alpha2/beta1, is required for the anti-angiogenic properties. Evokes a reduction in phosphorylation of receptor tyrosine kinases via alpha2/beta1 integrin-mediated activation of the tyrosine phosphatase, PTPN6.</text>
</comment>
<comment type="function">
    <molecule>LG3 peptide</molecule>
    <text>Has anti-angiogenic properties that require binding of calcium ions for full activity.</text>
</comment>
<comment type="subunit">
    <text evidence="2 12 14 16">Has a strong tendency to aggregate in dimers or stellate structures. Interacts with other basement membrane components such as laminin, prolargin and collagen type IV. Interacts with COL13A1 (PubMed:11956183). Interacts with FGFBP1 (PubMed:11148217). Interacts with VWA1 (By similarity). Interacts (via C-terminus) with ECM1 (via C-terminus) (PubMed:12604605). Interacts with SVEP1 (By similarity).</text>
</comment>
<comment type="interaction">
    <interactant intactId="EBI-947664">
        <id>P98160</id>
    </interactant>
    <interactant intactId="EBI-1005487">
        <id>P35968</id>
        <label>KDR</label>
    </interactant>
    <organismsDiffer>false</organismsDiffer>
    <experiments>5</experiments>
</comment>
<comment type="interaction">
    <interactant intactId="EBI-6896259">
        <id>PRO_0000391621</id>
    </interactant>
    <interactant intactId="EBI-6530464">
        <id>P17948-2</id>
        <label>FLT1</label>
    </interactant>
    <organismsDiffer>false</organismsDiffer>
    <experiments>2</experiments>
</comment>
<comment type="interaction">
    <interactant intactId="EBI-6896259">
        <id>PRO_0000391621</id>
    </interactant>
    <interactant intactId="EBI-1005487">
        <id>P35968</id>
        <label>KDR</label>
    </interactant>
    <organismsDiffer>false</organismsDiffer>
    <experiments>2</experiments>
</comment>
<comment type="interaction">
    <interactant intactId="EBI-6896607">
        <id>PRO_0000391622</id>
    </interactant>
    <interactant intactId="EBI-6530464">
        <id>P17948-2</id>
        <label>FLT1</label>
    </interactant>
    <organismsDiffer>false</organismsDiffer>
    <experiments>2</experiments>
</comment>
<comment type="interaction">
    <interactant intactId="EBI-6896607">
        <id>PRO_0000391622</id>
    </interactant>
    <interactant intactId="EBI-1005487">
        <id>P35968</id>
        <label>KDR</label>
    </interactant>
    <organismsDiffer>false</organismsDiffer>
    <experiments>2</experiments>
</comment>
<comment type="subcellular location">
    <subcellularLocation>
        <location>Secreted</location>
        <location>Extracellular space</location>
        <location>Extracellular matrix</location>
        <location>Basement membrane</location>
    </subcellularLocation>
    <subcellularLocation>
        <location evidence="25 27">Secreted</location>
    </subcellularLocation>
</comment>
<comment type="tissue specificity">
    <text evidence="25 27">Detected in cerebrospinal fluid, fibroblasts and urine (at protein level).</text>
</comment>
<comment type="PTM">
    <text evidence="15 18">Proteolytic processing produces the C-terminal angiogenic peptide, endorepellin. This peptide can be further processed to produce the LG3 peptide.</text>
</comment>
<comment type="PTM">
    <text evidence="18 24 25">O-glycosylated with core 1 or possibly core 8 glycans. Contains three heparan sulfate chains. Also contains chondroitin sulfate.</text>
</comment>
<comment type="disease" evidence="11">
    <disease id="DI-02288">
        <name>Schwartz-Jampel syndrome</name>
        <acronym>SJS1</acronym>
        <description>Rare autosomal recessive disorder characterized by permanent myotonia (prolonged failure of muscle relaxation) and skeletal dysplasia, resulting in reduced stature, kyphoscoliosis, bowing of the diaphyses and irregular epiphyses.</description>
        <dbReference type="MIM" id="255800"/>
    </disease>
    <text>The disease is caused by variants affecting the gene represented in this entry.</text>
</comment>
<comment type="disease" evidence="13">
    <disease id="DI-01512">
        <name>Dyssegmental dysplasia Silverman-Handmaker type</name>
        <acronym>DDSH</acronym>
        <description>The dyssegmental dysplasias are rare, autosomal recessive skeletal dysplasias with anisospondyly and micromelia. There are two recognized types: the severe, lethal DDSH and the milder Rolland-Desbuquois form. Individuals with DDSH also have a flat face, micrognathia, cleft palate and reduced joint mobility, and frequently have an encephalocoele. The endochondral growth plate is short, the calcospherites (which are spherical calcium-phosphorus crystals produced by hypertrophic chondrocytes) are unfused, and there is mucoid degeneration of the resting cartilage.</description>
        <dbReference type="MIM" id="224410"/>
    </disease>
    <text>The disease is caused by variants affecting the gene represented in this entry.</text>
</comment>
<comment type="miscellaneous">
    <molecule>LG3 peptide</molecule>
    <text>Has been found in the urine of patients with end-stage renal disease and in the amniotic fluid of pregnant women with premature rupture of fetal membranes.</text>
</comment>
<comment type="online information" name="Atlas of Genetics and Cytogenetics in Oncology and Haematology">
    <link uri="https://atlasgeneticsoncology.org/gene/40890/HSPG2"/>
</comment>
<comment type="online information" name="Wikipedia">
    <link uri="https://en.wikipedia.org/wiki/Perlecan"/>
    <text>Perlecan entry</text>
</comment>
<evidence type="ECO:0000250" key="1"/>
<evidence type="ECO:0000250" key="2">
    <source>
        <dbReference type="UniProtKB" id="Q05793"/>
    </source>
</evidence>
<evidence type="ECO:0000255" key="3"/>
<evidence type="ECO:0000255" key="4">
    <source>
        <dbReference type="PROSITE-ProRule" id="PRU00076"/>
    </source>
</evidence>
<evidence type="ECO:0000255" key="5">
    <source>
        <dbReference type="PROSITE-ProRule" id="PRU00122"/>
    </source>
</evidence>
<evidence type="ECO:0000255" key="6">
    <source>
        <dbReference type="PROSITE-ProRule" id="PRU00124"/>
    </source>
</evidence>
<evidence type="ECO:0000255" key="7">
    <source>
        <dbReference type="PROSITE-ProRule" id="PRU00188"/>
    </source>
</evidence>
<evidence type="ECO:0000255" key="8">
    <source>
        <dbReference type="PROSITE-ProRule" id="PRU00458"/>
    </source>
</evidence>
<evidence type="ECO:0000255" key="9">
    <source>
        <dbReference type="PROSITE-ProRule" id="PRU00460"/>
    </source>
</evidence>
<evidence type="ECO:0000256" key="10">
    <source>
        <dbReference type="SAM" id="MobiDB-lite"/>
    </source>
</evidence>
<evidence type="ECO:0000269" key="11">
    <source>
    </source>
</evidence>
<evidence type="ECO:0000269" key="12">
    <source>
    </source>
</evidence>
<evidence type="ECO:0000269" key="13">
    <source>
    </source>
</evidence>
<evidence type="ECO:0000269" key="14">
    <source>
    </source>
</evidence>
<evidence type="ECO:0000269" key="15">
    <source>
    </source>
</evidence>
<evidence type="ECO:0000269" key="16">
    <source>
    </source>
</evidence>
<evidence type="ECO:0000269" key="17">
    <source>
    </source>
</evidence>
<evidence type="ECO:0000269" key="18">
    <source>
    </source>
</evidence>
<evidence type="ECO:0000269" key="19">
    <source>
    </source>
</evidence>
<evidence type="ECO:0000269" key="20">
    <source>
    </source>
</evidence>
<evidence type="ECO:0000269" key="21">
    <source>
    </source>
</evidence>
<evidence type="ECO:0000269" key="22">
    <source>
    </source>
</evidence>
<evidence type="ECO:0000269" key="23">
    <source>
    </source>
</evidence>
<evidence type="ECO:0000269" key="24">
    <source>
    </source>
</evidence>
<evidence type="ECO:0000269" key="25">
    <source>
    </source>
</evidence>
<evidence type="ECO:0000269" key="26">
    <source>
    </source>
</evidence>
<evidence type="ECO:0000269" key="27">
    <source>
    </source>
</evidence>
<evidence type="ECO:0000305" key="28"/>
<evidence type="ECO:0007829" key="29">
    <source>
        <dbReference type="PDB" id="3SH4"/>
    </source>
</evidence>
<evidence type="ECO:0007829" key="30">
    <source>
        <dbReference type="PDB" id="3SH5"/>
    </source>
</evidence>
<name>PGBM_HUMAN</name>
<organism>
    <name type="scientific">Homo sapiens</name>
    <name type="common">Human</name>
    <dbReference type="NCBI Taxonomy" id="9606"/>
    <lineage>
        <taxon>Eukaryota</taxon>
        <taxon>Metazoa</taxon>
        <taxon>Chordata</taxon>
        <taxon>Craniata</taxon>
        <taxon>Vertebrata</taxon>
        <taxon>Euteleostomi</taxon>
        <taxon>Mammalia</taxon>
        <taxon>Eutheria</taxon>
        <taxon>Euarchontoglires</taxon>
        <taxon>Primates</taxon>
        <taxon>Haplorrhini</taxon>
        <taxon>Catarrhini</taxon>
        <taxon>Hominidae</taxon>
        <taxon>Homo</taxon>
    </lineage>
</organism>